<organism>
    <name type="scientific">Homo sapiens</name>
    <name type="common">Human</name>
    <dbReference type="NCBI Taxonomy" id="9606"/>
    <lineage>
        <taxon>Eukaryota</taxon>
        <taxon>Metazoa</taxon>
        <taxon>Chordata</taxon>
        <taxon>Craniata</taxon>
        <taxon>Vertebrata</taxon>
        <taxon>Euteleostomi</taxon>
        <taxon>Mammalia</taxon>
        <taxon>Eutheria</taxon>
        <taxon>Euarchontoglires</taxon>
        <taxon>Primates</taxon>
        <taxon>Haplorrhini</taxon>
        <taxon>Catarrhini</taxon>
        <taxon>Hominidae</taxon>
        <taxon>Homo</taxon>
    </lineage>
</organism>
<dbReference type="EMBL" id="AJ223828">
    <property type="protein sequence ID" value="CAA11565.1"/>
    <property type="molecule type" value="mRNA"/>
</dbReference>
<dbReference type="EMBL" id="AJ133129">
    <property type="protein sequence ID" value="CAB39725.1"/>
    <property type="molecule type" value="mRNA"/>
</dbReference>
<dbReference type="EMBL" id="AF408399">
    <property type="protein sequence ID" value="AAL01051.1"/>
    <property type="molecule type" value="mRNA"/>
</dbReference>
<dbReference type="EMBL" id="AF368279">
    <property type="protein sequence ID" value="AAP29457.1"/>
    <property type="molecule type" value="mRNA"/>
</dbReference>
<dbReference type="EMBL" id="AL050156">
    <property type="protein sequence ID" value="CAB43297.2"/>
    <property type="molecule type" value="mRNA"/>
</dbReference>
<dbReference type="EMBL" id="CR533517">
    <property type="protein sequence ID" value="CAG38548.1"/>
    <property type="molecule type" value="mRNA"/>
</dbReference>
<dbReference type="EMBL" id="CR542282">
    <property type="protein sequence ID" value="CAG47077.1"/>
    <property type="molecule type" value="mRNA"/>
</dbReference>
<dbReference type="EMBL" id="AC006538">
    <property type="protein sequence ID" value="AAD13117.1"/>
    <property type="molecule type" value="Genomic_DNA"/>
</dbReference>
<dbReference type="EMBL" id="CH471139">
    <property type="protein sequence ID" value="EAW69366.1"/>
    <property type="molecule type" value="Genomic_DNA"/>
</dbReference>
<dbReference type="EMBL" id="CH471139">
    <property type="protein sequence ID" value="EAW69367.1"/>
    <property type="molecule type" value="Genomic_DNA"/>
</dbReference>
<dbReference type="EMBL" id="CH471139">
    <property type="protein sequence ID" value="EAW69368.1"/>
    <property type="molecule type" value="Genomic_DNA"/>
</dbReference>
<dbReference type="EMBL" id="BC000390">
    <property type="protein sequence ID" value="AAH00390.1"/>
    <property type="molecule type" value="mRNA"/>
</dbReference>
<dbReference type="EMBL" id="BC002989">
    <property type="protein sequence ID" value="AAH02989.2"/>
    <property type="molecule type" value="mRNA"/>
</dbReference>
<dbReference type="EMBL" id="BC005165">
    <property type="protein sequence ID" value="AAH05165.1"/>
    <property type="molecule type" value="mRNA"/>
</dbReference>
<dbReference type="EMBL" id="BC008885">
    <property type="protein sequence ID" value="AAH08885.1"/>
    <property type="molecule type" value="mRNA"/>
</dbReference>
<dbReference type="CCDS" id="CCDS12094.1"/>
<dbReference type="RefSeq" id="NP_003012.1">
    <property type="nucleotide sequence ID" value="NM_003021.4"/>
</dbReference>
<dbReference type="RefSeq" id="XP_011526480.1">
    <property type="nucleotide sequence ID" value="XM_011528178.4"/>
</dbReference>
<dbReference type="RefSeq" id="XP_054177741.1">
    <property type="nucleotide sequence ID" value="XM_054321766.1"/>
</dbReference>
<dbReference type="PDB" id="2VYI">
    <property type="method" value="X-ray"/>
    <property type="resolution" value="2.40 A"/>
    <property type="chains" value="A/B=84-210"/>
</dbReference>
<dbReference type="PDB" id="4CPG">
    <property type="method" value="NMR"/>
    <property type="chains" value="A/B=1-69"/>
</dbReference>
<dbReference type="PDB" id="4GOD">
    <property type="method" value="X-ray"/>
    <property type="resolution" value="1.40 A"/>
    <property type="chains" value="A/B=4-54"/>
</dbReference>
<dbReference type="PDB" id="4GOE">
    <property type="method" value="X-ray"/>
    <property type="resolution" value="1.45 A"/>
    <property type="chains" value="A/B=4-54"/>
</dbReference>
<dbReference type="PDB" id="4GOF">
    <property type="method" value="X-ray"/>
    <property type="resolution" value="1.35 A"/>
    <property type="chains" value="A/B=4-54"/>
</dbReference>
<dbReference type="PDBsum" id="2VYI"/>
<dbReference type="PDBsum" id="4CPG"/>
<dbReference type="PDBsum" id="4GOD"/>
<dbReference type="PDBsum" id="4GOE"/>
<dbReference type="PDBsum" id="4GOF"/>
<dbReference type="BMRB" id="O43765"/>
<dbReference type="SASBDB" id="O43765"/>
<dbReference type="SMR" id="O43765"/>
<dbReference type="BioGRID" id="112347">
    <property type="interactions" value="338"/>
</dbReference>
<dbReference type="CORUM" id="O43765"/>
<dbReference type="FunCoup" id="O43765">
    <property type="interactions" value="3654"/>
</dbReference>
<dbReference type="IntAct" id="O43765">
    <property type="interactions" value="224"/>
</dbReference>
<dbReference type="MINT" id="O43765"/>
<dbReference type="STRING" id="9606.ENSP00000221566"/>
<dbReference type="GlyGen" id="O43765">
    <property type="glycosylation" value="3 sites, 1 O-linked glycan (1 site)"/>
</dbReference>
<dbReference type="iPTMnet" id="O43765"/>
<dbReference type="PhosphoSitePlus" id="O43765"/>
<dbReference type="SwissPalm" id="O43765"/>
<dbReference type="BioMuta" id="SGTA"/>
<dbReference type="jPOST" id="O43765"/>
<dbReference type="MassIVE" id="O43765"/>
<dbReference type="PaxDb" id="9606-ENSP00000221566"/>
<dbReference type="PeptideAtlas" id="O43765"/>
<dbReference type="ProteomicsDB" id="49156"/>
<dbReference type="Pumba" id="O43765"/>
<dbReference type="TopDownProteomics" id="O43765"/>
<dbReference type="Antibodypedia" id="23040">
    <property type="antibodies" value="276 antibodies from 34 providers"/>
</dbReference>
<dbReference type="DNASU" id="6449"/>
<dbReference type="Ensembl" id="ENST00000221566.7">
    <property type="protein sequence ID" value="ENSP00000221566.1"/>
    <property type="gene ID" value="ENSG00000104969.11"/>
</dbReference>
<dbReference type="Ensembl" id="ENST00000676943.1">
    <property type="protein sequence ID" value="ENSP00000504495.1"/>
    <property type="gene ID" value="ENSG00000104969.11"/>
</dbReference>
<dbReference type="Ensembl" id="ENST00000677149.1">
    <property type="protein sequence ID" value="ENSP00000503397.1"/>
    <property type="gene ID" value="ENSG00000104969.11"/>
</dbReference>
<dbReference type="GeneID" id="6449"/>
<dbReference type="KEGG" id="hsa:6449"/>
<dbReference type="MANE-Select" id="ENST00000221566.7">
    <property type="protein sequence ID" value="ENSP00000221566.1"/>
    <property type="RefSeq nucleotide sequence ID" value="NM_003021.4"/>
    <property type="RefSeq protein sequence ID" value="NP_003012.1"/>
</dbReference>
<dbReference type="UCSC" id="uc002lwi.2">
    <property type="organism name" value="human"/>
</dbReference>
<dbReference type="AGR" id="HGNC:10819"/>
<dbReference type="CTD" id="6449"/>
<dbReference type="DisGeNET" id="6449"/>
<dbReference type="GeneCards" id="SGTA"/>
<dbReference type="HGNC" id="HGNC:10819">
    <property type="gene designation" value="SGTA"/>
</dbReference>
<dbReference type="HPA" id="ENSG00000104969">
    <property type="expression patterns" value="Low tissue specificity"/>
</dbReference>
<dbReference type="MIM" id="603419">
    <property type="type" value="gene"/>
</dbReference>
<dbReference type="neXtProt" id="NX_O43765"/>
<dbReference type="OpenTargets" id="ENSG00000104969"/>
<dbReference type="PharmGKB" id="PA35727"/>
<dbReference type="VEuPathDB" id="HostDB:ENSG00000104969"/>
<dbReference type="eggNOG" id="KOG0553">
    <property type="taxonomic scope" value="Eukaryota"/>
</dbReference>
<dbReference type="GeneTree" id="ENSGT00940000159037"/>
<dbReference type="HOGENOM" id="CLU_044224_0_0_1"/>
<dbReference type="InParanoid" id="O43765"/>
<dbReference type="OMA" id="LAIKDCH"/>
<dbReference type="OrthoDB" id="2335338at2759"/>
<dbReference type="PAN-GO" id="O43765">
    <property type="GO annotations" value="5 GO annotations based on evolutionary models"/>
</dbReference>
<dbReference type="PhylomeDB" id="O43765"/>
<dbReference type="TreeFam" id="TF313092"/>
<dbReference type="PathwayCommons" id="O43765"/>
<dbReference type="Reactome" id="R-HSA-9609523">
    <property type="pathway name" value="Insertion of tail-anchored proteins into the endoplasmic reticulum membrane"/>
</dbReference>
<dbReference type="SignaLink" id="O43765"/>
<dbReference type="SIGNOR" id="O43765"/>
<dbReference type="BioGRID-ORCS" id="6449">
    <property type="hits" value="22 hits in 1158 CRISPR screens"/>
</dbReference>
<dbReference type="ChiTaRS" id="SGTA">
    <property type="organism name" value="human"/>
</dbReference>
<dbReference type="EvolutionaryTrace" id="O43765"/>
<dbReference type="GeneWiki" id="SGTA"/>
<dbReference type="GenomeRNAi" id="6449"/>
<dbReference type="Pharos" id="O43765">
    <property type="development level" value="Tbio"/>
</dbReference>
<dbReference type="PRO" id="PR:O43765"/>
<dbReference type="Proteomes" id="UP000005640">
    <property type="component" value="Chromosome 19"/>
</dbReference>
<dbReference type="RNAct" id="O43765">
    <property type="molecule type" value="protein"/>
</dbReference>
<dbReference type="Bgee" id="ENSG00000104969">
    <property type="expression patterns" value="Expressed in apex of heart and 164 other cell types or tissues"/>
</dbReference>
<dbReference type="ExpressionAtlas" id="O43765">
    <property type="expression patterns" value="baseline and differential"/>
</dbReference>
<dbReference type="GO" id="GO:0005737">
    <property type="term" value="C:cytoplasm"/>
    <property type="evidence" value="ECO:0000314"/>
    <property type="project" value="UniProtKB"/>
</dbReference>
<dbReference type="GO" id="GO:0005829">
    <property type="term" value="C:cytosol"/>
    <property type="evidence" value="ECO:0000314"/>
    <property type="project" value="ParkinsonsUK-UCL"/>
</dbReference>
<dbReference type="GO" id="GO:0016020">
    <property type="term" value="C:membrane"/>
    <property type="evidence" value="ECO:0000314"/>
    <property type="project" value="ParkinsonsUK-UCL"/>
</dbReference>
<dbReference type="GO" id="GO:0005654">
    <property type="term" value="C:nucleoplasm"/>
    <property type="evidence" value="ECO:0000314"/>
    <property type="project" value="HPA"/>
</dbReference>
<dbReference type="GO" id="GO:0005634">
    <property type="term" value="C:nucleus"/>
    <property type="evidence" value="ECO:0000314"/>
    <property type="project" value="UniProtKB"/>
</dbReference>
<dbReference type="GO" id="GO:0072380">
    <property type="term" value="C:TRC complex"/>
    <property type="evidence" value="ECO:0000318"/>
    <property type="project" value="GO_Central"/>
</dbReference>
<dbReference type="GO" id="GO:1904288">
    <property type="term" value="F:BAT3 complex binding"/>
    <property type="evidence" value="ECO:0000353"/>
    <property type="project" value="ParkinsonsUK-UCL"/>
</dbReference>
<dbReference type="GO" id="GO:0042802">
    <property type="term" value="F:identical protein binding"/>
    <property type="evidence" value="ECO:0000353"/>
    <property type="project" value="IntAct"/>
</dbReference>
<dbReference type="GO" id="GO:0060090">
    <property type="term" value="F:molecular adaptor activity"/>
    <property type="evidence" value="ECO:0000318"/>
    <property type="project" value="GO_Central"/>
</dbReference>
<dbReference type="GO" id="GO:0036503">
    <property type="term" value="P:ERAD pathway"/>
    <property type="evidence" value="ECO:0000314"/>
    <property type="project" value="UniProtKB"/>
</dbReference>
<dbReference type="GO" id="GO:1904293">
    <property type="term" value="P:negative regulation of ERAD pathway"/>
    <property type="evidence" value="ECO:0000314"/>
    <property type="project" value="UniProtKB"/>
</dbReference>
<dbReference type="GO" id="GO:2000059">
    <property type="term" value="P:negative regulation of ubiquitin-dependent protein catabolic process"/>
    <property type="evidence" value="ECO:0000314"/>
    <property type="project" value="UniProtKB"/>
</dbReference>
<dbReference type="GO" id="GO:1904294">
    <property type="term" value="P:positive regulation of ERAD pathway"/>
    <property type="evidence" value="ECO:0000315"/>
    <property type="project" value="ParkinsonsUK-UCL"/>
</dbReference>
<dbReference type="GO" id="GO:2000060">
    <property type="term" value="P:positive regulation of ubiquitin-dependent protein catabolic process"/>
    <property type="evidence" value="ECO:0000315"/>
    <property type="project" value="ParkinsonsUK-UCL"/>
</dbReference>
<dbReference type="GO" id="GO:0006620">
    <property type="term" value="P:post-translational protein targeting to endoplasmic reticulum membrane"/>
    <property type="evidence" value="ECO:0000318"/>
    <property type="project" value="GO_Central"/>
</dbReference>
<dbReference type="GO" id="GO:0071816">
    <property type="term" value="P:tail-anchored membrane protein insertion into ER membrane"/>
    <property type="evidence" value="ECO:0000314"/>
    <property type="project" value="UniProtKB"/>
</dbReference>
<dbReference type="FunFam" id="1.20.5.420:FF:000002">
    <property type="entry name" value="Small glutamine-rich tetratricopeptide repeat-containing protein alpha"/>
    <property type="match status" value="1"/>
</dbReference>
<dbReference type="FunFam" id="1.25.40.10:FF:000108">
    <property type="entry name" value="Small glutamine-rich tetratricopeptide repeat-containing protein alpha"/>
    <property type="match status" value="1"/>
</dbReference>
<dbReference type="Gene3D" id="1.20.5.420">
    <property type="entry name" value="Immunoglobulin FC, subunit C"/>
    <property type="match status" value="1"/>
</dbReference>
<dbReference type="Gene3D" id="1.25.40.10">
    <property type="entry name" value="Tetratricopeptide repeat domain"/>
    <property type="match status" value="1"/>
</dbReference>
<dbReference type="InterPro" id="IPR047150">
    <property type="entry name" value="SGT"/>
</dbReference>
<dbReference type="InterPro" id="IPR032374">
    <property type="entry name" value="SGTA_dimer"/>
</dbReference>
<dbReference type="InterPro" id="IPR011990">
    <property type="entry name" value="TPR-like_helical_dom_sf"/>
</dbReference>
<dbReference type="InterPro" id="IPR019734">
    <property type="entry name" value="TPR_rpt"/>
</dbReference>
<dbReference type="PANTHER" id="PTHR45831">
    <property type="entry name" value="LD24721P"/>
    <property type="match status" value="1"/>
</dbReference>
<dbReference type="PANTHER" id="PTHR45831:SF3">
    <property type="entry name" value="SMALL GLUTAMINE-RICH TETRATRICOPEPTIDE REPEAT-CONTAINING PROTEIN ALPHA"/>
    <property type="match status" value="1"/>
</dbReference>
<dbReference type="Pfam" id="PF16546">
    <property type="entry name" value="SGTA_dimer"/>
    <property type="match status" value="1"/>
</dbReference>
<dbReference type="Pfam" id="PF00515">
    <property type="entry name" value="TPR_1"/>
    <property type="match status" value="2"/>
</dbReference>
<dbReference type="Pfam" id="PF13181">
    <property type="entry name" value="TPR_8"/>
    <property type="match status" value="1"/>
</dbReference>
<dbReference type="SMART" id="SM00028">
    <property type="entry name" value="TPR"/>
    <property type="match status" value="3"/>
</dbReference>
<dbReference type="SUPFAM" id="SSF48452">
    <property type="entry name" value="TPR-like"/>
    <property type="match status" value="1"/>
</dbReference>
<dbReference type="PROSITE" id="PS50005">
    <property type="entry name" value="TPR"/>
    <property type="match status" value="3"/>
</dbReference>
<dbReference type="PROSITE" id="PS50293">
    <property type="entry name" value="TPR_REGION"/>
    <property type="match status" value="1"/>
</dbReference>
<feature type="chain" id="PRO_0000106365" description="Small glutamine-rich tetratricopeptide repeat-containing protein alpha">
    <location>
        <begin position="1"/>
        <end position="313"/>
    </location>
</feature>
<feature type="repeat" description="TPR 1">
    <location>
        <begin position="91"/>
        <end position="124"/>
    </location>
</feature>
<feature type="repeat" description="TPR 2">
    <location>
        <begin position="125"/>
        <end position="158"/>
    </location>
</feature>
<feature type="repeat" description="TPR 3">
    <location>
        <begin position="159"/>
        <end position="192"/>
    </location>
</feature>
<feature type="region of interest" description="Disordered" evidence="2">
    <location>
        <begin position="66"/>
        <end position="100"/>
    </location>
</feature>
<feature type="region of interest" description="Disordered" evidence="2">
    <location>
        <begin position="250"/>
        <end position="269"/>
    </location>
</feature>
<feature type="compositionally biased region" description="Basic and acidic residues" evidence="2">
    <location>
        <begin position="90"/>
        <end position="100"/>
    </location>
</feature>
<feature type="modified residue" description="Phosphoserine" evidence="17 19 22">
    <location>
        <position position="77"/>
    </location>
</feature>
<feature type="modified residue" description="Phosphothreonine" evidence="17 19 22 23">
    <location>
        <position position="81"/>
    </location>
</feature>
<feature type="modified residue" description="Phosphoserine" evidence="1">
    <location>
        <position position="84"/>
    </location>
</feature>
<feature type="modified residue" description="N6-acetyllysine" evidence="18">
    <location>
        <position position="137"/>
    </location>
</feature>
<feature type="modified residue" description="Phosphoserine" evidence="17 21 22">
    <location>
        <position position="301"/>
    </location>
</feature>
<feature type="modified residue" description="Phosphothreonine" evidence="17 20 23">
    <location>
        <position position="303"/>
    </location>
</feature>
<feature type="modified residue" description="Phosphoserine" evidence="16 17 19 21 23">
    <location>
        <position position="305"/>
    </location>
</feature>
<feature type="mutagenesis site" description="Reduces tail-anchored proteins transfer." evidence="11">
    <original>C</original>
    <variation>A</variation>
    <location>
        <position position="38"/>
    </location>
</feature>
<feature type="helix" evidence="26">
    <location>
        <begin position="5"/>
        <end position="21"/>
    </location>
</feature>
<feature type="helix" evidence="26">
    <location>
        <begin position="26"/>
        <end position="43"/>
    </location>
</feature>
<feature type="helix" evidence="25">
    <location>
        <begin position="48"/>
        <end position="51"/>
    </location>
</feature>
<feature type="helix" evidence="25">
    <location>
        <begin position="58"/>
        <end position="65"/>
    </location>
</feature>
<feature type="helix" evidence="24">
    <location>
        <begin position="87"/>
        <end position="103"/>
    </location>
</feature>
<feature type="helix" evidence="24">
    <location>
        <begin position="107"/>
        <end position="120"/>
    </location>
</feature>
<feature type="helix" evidence="24">
    <location>
        <begin position="125"/>
        <end position="137"/>
    </location>
</feature>
<feature type="helix" evidence="24">
    <location>
        <begin position="141"/>
        <end position="154"/>
    </location>
</feature>
<feature type="helix" evidence="24">
    <location>
        <begin position="159"/>
        <end position="171"/>
    </location>
</feature>
<feature type="helix" evidence="24">
    <location>
        <begin position="175"/>
        <end position="188"/>
    </location>
</feature>
<feature type="helix" evidence="24">
    <location>
        <begin position="193"/>
        <end position="206"/>
    </location>
</feature>
<accession>O43765</accession>
<accession>D6W610</accession>
<accession>Q6FIA9</accession>
<accession>Q9BTZ9</accession>
<name>SGTA_HUMAN</name>
<evidence type="ECO:0000250" key="1">
    <source>
        <dbReference type="UniProtKB" id="O70593"/>
    </source>
</evidence>
<evidence type="ECO:0000256" key="2">
    <source>
        <dbReference type="SAM" id="MobiDB-lite"/>
    </source>
</evidence>
<evidence type="ECO:0000269" key="3">
    <source>
    </source>
</evidence>
<evidence type="ECO:0000269" key="4">
    <source>
    </source>
</evidence>
<evidence type="ECO:0000269" key="5">
    <source>
    </source>
</evidence>
<evidence type="ECO:0000269" key="6">
    <source>
    </source>
</evidence>
<evidence type="ECO:0000269" key="7">
    <source>
    </source>
</evidence>
<evidence type="ECO:0000269" key="8">
    <source>
    </source>
</evidence>
<evidence type="ECO:0000269" key="9">
    <source>
    </source>
</evidence>
<evidence type="ECO:0000269" key="10">
    <source>
    </source>
</evidence>
<evidence type="ECO:0000269" key="11">
    <source>
    </source>
</evidence>
<evidence type="ECO:0000269" key="12">
    <source>
    </source>
</evidence>
<evidence type="ECO:0000269" key="13">
    <source>
    </source>
</evidence>
<evidence type="ECO:0000269" key="14">
    <source>
    </source>
</evidence>
<evidence type="ECO:0000305" key="15"/>
<evidence type="ECO:0007744" key="16">
    <source>
    </source>
</evidence>
<evidence type="ECO:0007744" key="17">
    <source>
    </source>
</evidence>
<evidence type="ECO:0007744" key="18">
    <source>
    </source>
</evidence>
<evidence type="ECO:0007744" key="19">
    <source>
    </source>
</evidence>
<evidence type="ECO:0007744" key="20">
    <source>
    </source>
</evidence>
<evidence type="ECO:0007744" key="21">
    <source>
    </source>
</evidence>
<evidence type="ECO:0007744" key="22">
    <source>
    </source>
</evidence>
<evidence type="ECO:0007744" key="23">
    <source>
    </source>
</evidence>
<evidence type="ECO:0007829" key="24">
    <source>
        <dbReference type="PDB" id="2VYI"/>
    </source>
</evidence>
<evidence type="ECO:0007829" key="25">
    <source>
        <dbReference type="PDB" id="4CPG"/>
    </source>
</evidence>
<evidence type="ECO:0007829" key="26">
    <source>
        <dbReference type="PDB" id="4GOF"/>
    </source>
</evidence>
<comment type="function">
    <text evidence="7 8 10 11 12 13">Co-chaperone that binds misfolded and hydrophobic patches-containing client proteins in the cytosol. Mediates their targeting to the endoplasmic reticulum but also regulates their sorting to the proteasome when targeting fails (PubMed:28104892). Functions in tail-anchored/type II transmembrane proteins membrane insertion constituting with ASNA1 and the BAG6 complex a targeting module (PubMed:28104892). Functions upstream of the BAG6 complex and ASNA1, binding more rapidly the transmembrane domain of newly synthesized proteins (PubMed:25535373, PubMed:28104892). It is also involved in the regulation of the endoplasmic reticulum-associated misfolded protein catabolic process via its interaction with BAG6: collaborates with the BAG6 complex to maintain hydrophobic substrates in non-ubiquitinated states (PubMed:23129660, PubMed:25179605). Competes with RNF126 for interaction with BAG6, preventing the ubiquitination of client proteins associated with the BAG6 complex (PubMed:27193484). Binds directly to HSC70 and HSP70 and regulates their ATPase activity (PubMed:18759457).</text>
</comment>
<comment type="function">
    <text evidence="9">(Microbial infection) In case of infection by polyomavirus, involved in the virus endoplasmic reticulum membrane penetration and infection via interaction with DNAJB12, DNAJB14 and HSPA8/Hsc70 (PubMed:24675744).</text>
</comment>
<comment type="subunit">
    <text evidence="1 3 4 6 7 8 9 10 12">Homodimer (PubMed:15708368). Homooligomer (By similarity). Interacts with DNAJC5 and DNAJC5B. Interacts (via TPR repeats) with HSP90AA1 (PubMed:15708368). Interacts (via Gln-rich region) with SLC2A1 (PubMed:15708368). Interacts with HSP90AB1 (PubMed:16580629). Interacts (via TPR repeats) with HSPA8/Hsc70; the interaction is direct (PubMed:24675744). Interacts with BAG6 (via ubiquitin-like domain); interaction prevents interaction between BAG6 and RNF126 (PubMed:23129660, PubMed:25179605, PubMed:27193484). Forms a multiprotein complex, at least composed of DNAJB12, DNAJB14, HSPA8/Hsc70 and SGTA; interaction with DNAJB14 and HSPA8/Hsc70 is direct (PubMed:24675744).</text>
</comment>
<comment type="subunit">
    <text evidence="7 14">(Microbial infection) Interacts with Vpu and Gag from HIV-1.</text>
</comment>
<comment type="subunit">
    <text evidence="5">(Microbial infection) Interacts with SARS-CoV accessory protein 7a.</text>
</comment>
<comment type="interaction">
    <interactant intactId="EBI-347996">
        <id>O43765</id>
    </interactant>
    <interactant intactId="EBI-12046857">
        <id>Q9UKJ8</id>
        <label>ADAM21</label>
    </interactant>
    <organismsDiffer>false</organismsDiffer>
    <experiments>3</experiments>
</comment>
<comment type="interaction">
    <interactant intactId="EBI-347996">
        <id>O43765</id>
    </interactant>
    <interactant intactId="EBI-10174479">
        <id>A8K660</id>
        <label>ADIPOQ</label>
    </interactant>
    <organismsDiffer>false</organismsDiffer>
    <experiments>3</experiments>
</comment>
<comment type="interaction">
    <interactant intactId="EBI-347996">
        <id>O43765</id>
    </interactant>
    <interactant intactId="EBI-10827839">
        <id>Q15848</id>
        <label>ADIPOQ</label>
    </interactant>
    <organismsDiffer>false</organismsDiffer>
    <experiments>7</experiments>
</comment>
<comment type="interaction">
    <interactant intactId="EBI-347996">
        <id>O43765</id>
    </interactant>
    <interactant intactId="EBI-712648">
        <id>O95994</id>
        <label>AGR2</label>
    </interactant>
    <organismsDiffer>false</organismsDiffer>
    <experiments>3</experiments>
</comment>
<comment type="interaction">
    <interactant intactId="EBI-347996">
        <id>O43765</id>
    </interactant>
    <interactant intactId="EBI-3925742">
        <id>Q8TD06</id>
        <label>AGR3</label>
    </interactant>
    <organismsDiffer>false</organismsDiffer>
    <experiments>6</experiments>
</comment>
<comment type="interaction">
    <interactant intactId="EBI-347996">
        <id>O43765</id>
    </interactant>
    <interactant intactId="EBI-3921628">
        <id>Q16853</id>
        <label>AOC3</label>
    </interactant>
    <organismsDiffer>false</organismsDiffer>
    <experiments>3</experiments>
</comment>
<comment type="interaction">
    <interactant intactId="EBI-347996">
        <id>O43765</id>
    </interactant>
    <interactant intactId="EBI-355275">
        <id>O95816</id>
        <label>BAG2</label>
    </interactant>
    <organismsDiffer>false</organismsDiffer>
    <experiments>2</experiments>
</comment>
<comment type="interaction">
    <interactant intactId="EBI-347996">
        <id>O43765</id>
    </interactant>
    <interactant intactId="EBI-347552">
        <id>P46379</id>
        <label>BAG6</label>
    </interactant>
    <organismsDiffer>false</organismsDiffer>
    <experiments>6</experiments>
</comment>
<comment type="interaction">
    <interactant intactId="EBI-347996">
        <id>O43765</id>
    </interactant>
    <interactant intactId="EBI-10988864">
        <id>P46379-2</id>
        <label>BAG6</label>
    </interactant>
    <organismsDiffer>false</organismsDiffer>
    <experiments>3</experiments>
</comment>
<comment type="interaction">
    <interactant intactId="EBI-347996">
        <id>O43765</id>
    </interactant>
    <interactant intactId="EBI-6590057">
        <id>P35070</id>
        <label>BTC</label>
    </interactant>
    <organismsDiffer>false</organismsDiffer>
    <experiments>6</experiments>
</comment>
<comment type="interaction">
    <interactant intactId="EBI-347996">
        <id>O43765</id>
    </interactant>
    <interactant intactId="EBI-12062109">
        <id>Q86Z23</id>
        <label>C1QL4</label>
    </interactant>
    <organismsDiffer>false</organismsDiffer>
    <experiments>3</experiments>
</comment>
<comment type="interaction">
    <interactant intactId="EBI-347996">
        <id>O43765</id>
    </interactant>
    <interactant intactId="EBI-750200">
        <id>Q9BXJ1</id>
        <label>C1QTNF1</label>
    </interactant>
    <organismsDiffer>false</organismsDiffer>
    <experiments>4</experiments>
</comment>
<comment type="interaction">
    <interactant intactId="EBI-347996">
        <id>O43765</id>
    </interactant>
    <interactant intactId="EBI-19947914">
        <id>Q9BXJ0</id>
        <label>C1QTNF5</label>
    </interactant>
    <organismsDiffer>false</organismsDiffer>
    <experiments>3</experiments>
</comment>
<comment type="interaction">
    <interactant intactId="EBI-347996">
        <id>O43765</id>
    </interactant>
    <interactant intactId="EBI-10301084">
        <id>Q9BXI9</id>
        <label>C1QTNF6</label>
    </interactant>
    <organismsDiffer>false</organismsDiffer>
    <experiments>9</experiments>
</comment>
<comment type="interaction">
    <interactant intactId="EBI-347996">
        <id>O43765</id>
    </interactant>
    <interactant intactId="EBI-11986083">
        <id>Q6UWT4</id>
        <label>C5orf46</label>
    </interactant>
    <organismsDiffer>false</organismsDiffer>
    <experiments>3</experiments>
</comment>
<comment type="interaction">
    <interactant intactId="EBI-347996">
        <id>O43765</id>
    </interactant>
    <interactant intactId="EBI-2873732">
        <id>P40259</id>
        <label>CD79B</label>
    </interactant>
    <organismsDiffer>false</organismsDiffer>
    <experiments>6</experiments>
</comment>
<comment type="interaction">
    <interactant intactId="EBI-347996">
        <id>O43765</id>
    </interactant>
    <interactant intactId="EBI-2824782">
        <id>Q8TCZ2</id>
        <label>CD99L2</label>
    </interactant>
    <organismsDiffer>false</organismsDiffer>
    <experiments>8</experiments>
</comment>
<comment type="interaction">
    <interactant intactId="EBI-347996">
        <id>O43765</id>
    </interactant>
    <interactant intactId="EBI-10215061">
        <id>P55291</id>
        <label>CDH15</label>
    </interactant>
    <organismsDiffer>false</organismsDiffer>
    <experiments>8</experiments>
</comment>
<comment type="interaction">
    <interactant intactId="EBI-347996">
        <id>O43765</id>
    </interactant>
    <interactant intactId="EBI-11979451">
        <id>P07510-2</id>
        <label>CHRNG</label>
    </interactant>
    <organismsDiffer>false</organismsDiffer>
    <experiments>3</experiments>
</comment>
<comment type="interaction">
    <interactant intactId="EBI-347996">
        <id>O43765</id>
    </interactant>
    <interactant intactId="EBI-16431143">
        <id>A0A0S2Z3K0</id>
        <label>COL1A2</label>
    </interactant>
    <organismsDiffer>false</organismsDiffer>
    <experiments>3</experiments>
</comment>
<comment type="interaction">
    <interactant intactId="EBI-347996">
        <id>O43765</id>
    </interactant>
    <interactant intactId="EBI-983038">
        <id>P08123</id>
        <label>COL1A2</label>
    </interactant>
    <organismsDiffer>false</organismsDiffer>
    <experiments>11</experiments>
</comment>
<comment type="interaction">
    <interactant intactId="EBI-347996">
        <id>O43765</id>
    </interactant>
    <interactant intactId="EBI-10241815">
        <id>Q4VAQ0</id>
        <label>COL8A2</label>
    </interactant>
    <organismsDiffer>false</organismsDiffer>
    <experiments>3</experiments>
</comment>
<comment type="interaction">
    <interactant intactId="EBI-347996">
        <id>O43765</id>
    </interactant>
    <interactant intactId="EBI-852194">
        <id>Q68CJ9</id>
        <label>CREB3L3</label>
    </interactant>
    <organismsDiffer>false</organismsDiffer>
    <experiments>3</experiments>
</comment>
<comment type="interaction">
    <interactant intactId="EBI-347996">
        <id>O43765</id>
    </interactant>
    <interactant intactId="EBI-2872294">
        <id>P09603</id>
        <label>CSF1</label>
    </interactant>
    <organismsDiffer>false</organismsDiffer>
    <experiments>6</experiments>
</comment>
<comment type="interaction">
    <interactant intactId="EBI-347996">
        <id>O43765</id>
    </interactant>
    <interactant intactId="EBI-1056240">
        <id>P01037</id>
        <label>CST1</label>
    </interactant>
    <organismsDiffer>false</organismsDiffer>
    <experiments>3</experiments>
</comment>
<comment type="interaction">
    <interactant intactId="EBI-347996">
        <id>O43765</id>
    </interactant>
    <interactant intactId="EBI-1188472">
        <id>P78358</id>
        <label>CTAG1B</label>
    </interactant>
    <organismsDiffer>false</organismsDiffer>
    <experiments>3</experiments>
</comment>
<comment type="interaction">
    <interactant intactId="EBI-347996">
        <id>O43765</id>
    </interactant>
    <interactant intactId="EBI-1220160">
        <id>P07711</id>
        <label>CTSL</label>
    </interactant>
    <organismsDiffer>false</organismsDiffer>
    <experiments>3</experiments>
</comment>
<comment type="interaction">
    <interactant intactId="EBI-347996">
        <id>O43765</id>
    </interactant>
    <interactant intactId="EBI-953870">
        <id>Q9UHQ9</id>
        <label>CYB5R1</label>
    </interactant>
    <organismsDiffer>false</organismsDiffer>
    <experiments>3</experiments>
</comment>
<comment type="interaction">
    <interactant intactId="EBI-347996">
        <id>O43765</id>
    </interactant>
    <interactant intactId="EBI-12304807">
        <id>P59861</id>
        <label>DEFB131A</label>
    </interactant>
    <organismsDiffer>false</organismsDiffer>
    <experiments>5</experiments>
</comment>
<comment type="interaction">
    <interactant intactId="EBI-347996">
        <id>O43765</id>
    </interactant>
    <interactant intactId="EBI-954409">
        <id>Q9UBP4</id>
        <label>DKK3</label>
    </interactant>
    <organismsDiffer>false</organismsDiffer>
    <experiments>3</experiments>
</comment>
<comment type="interaction">
    <interactant intactId="EBI-347996">
        <id>O43765</id>
    </interactant>
    <interactant intactId="EBI-7943171">
        <id>Q6E0U4</id>
        <label>DMKN</label>
    </interactant>
    <organismsDiffer>false</organismsDiffer>
    <experiments>3</experiments>
</comment>
<comment type="interaction">
    <interactant intactId="EBI-347996">
        <id>O43765</id>
    </interactant>
    <interactant intactId="EBI-526033">
        <id>Q9HAV5</id>
        <label>EDA2R</label>
    </interactant>
    <organismsDiffer>false</organismsDiffer>
    <experiments>3</experiments>
</comment>
<comment type="interaction">
    <interactant intactId="EBI-347996">
        <id>O43765</id>
    </interactant>
    <interactant intactId="EBI-12964110">
        <id>Q9UNE0-2</id>
        <label>EDAR</label>
    </interactant>
    <organismsDiffer>false</organismsDiffer>
    <experiments>3</experiments>
</comment>
<comment type="interaction">
    <interactant intactId="EBI-347996">
        <id>O43765</id>
    </interactant>
    <interactant intactId="EBI-16434097">
        <id>A0A0S2Z3V1</id>
        <label>EFEMP1</label>
    </interactant>
    <organismsDiffer>false</organismsDiffer>
    <experiments>3</experiments>
</comment>
<comment type="interaction">
    <interactant intactId="EBI-347996">
        <id>O43765</id>
    </interactant>
    <interactant intactId="EBI-536772">
        <id>Q12805</id>
        <label>EFEMP1</label>
    </interactant>
    <organismsDiffer>false</organismsDiffer>
    <experiments>14</experiments>
</comment>
<comment type="interaction">
    <interactant intactId="EBI-347996">
        <id>O43765</id>
    </interactant>
    <interactant intactId="EBI-743414">
        <id>O95967</id>
        <label>EFEMP2</label>
    </interactant>
    <organismsDiffer>false</organismsDiffer>
    <experiments>7</experiments>
</comment>
<comment type="interaction">
    <interactant intactId="EBI-347996">
        <id>O43765</id>
    </interactant>
    <interactant intactId="EBI-953772">
        <id>Q96DN0</id>
        <label>ERP27</label>
    </interactant>
    <organismsDiffer>false</organismsDiffer>
    <experiments>7</experiments>
</comment>
<comment type="interaction">
    <interactant intactId="EBI-347996">
        <id>O43765</id>
    </interactant>
    <interactant intactId="EBI-946830">
        <id>P30040</id>
        <label>ERP29</label>
    </interactant>
    <organismsDiffer>false</organismsDiffer>
    <experiments>3</experiments>
</comment>
<comment type="interaction">
    <interactant intactId="EBI-347996">
        <id>O43765</id>
    </interactant>
    <interactant intactId="EBI-2834493">
        <id>Q9HBU6</id>
        <label>ETNK1</label>
    </interactant>
    <organismsDiffer>false</organismsDiffer>
    <experiments>3</experiments>
</comment>
<comment type="interaction">
    <interactant intactId="EBI-347996">
        <id>O43765</id>
    </interactant>
    <interactant intactId="EBI-10314666">
        <id>Q9NVM1</id>
        <label>EVA1B</label>
    </interactant>
    <organismsDiffer>false</organismsDiffer>
    <experiments>6</experiments>
</comment>
<comment type="interaction">
    <interactant intactId="EBI-347996">
        <id>O43765</id>
    </interactant>
    <interactant intactId="EBI-742600">
        <id>Q9Y624</id>
        <label>F11R</label>
    </interactant>
    <organismsDiffer>false</organismsDiffer>
    <experiments>11</experiments>
</comment>
<comment type="interaction">
    <interactant intactId="EBI-347996">
        <id>O43765</id>
    </interactant>
    <interactant intactId="EBI-10183007">
        <id>Q96RJ6</id>
        <label>FERD3L</label>
    </interactant>
    <organismsDiffer>false</organismsDiffer>
    <experiments>3</experiments>
</comment>
<comment type="interaction">
    <interactant intactId="EBI-347996">
        <id>O43765</id>
    </interactant>
    <interactant intactId="EBI-3909329">
        <id>Q9NSA1</id>
        <label>FGF21</label>
    </interactant>
    <organismsDiffer>false</organismsDiffer>
    <experiments>3</experiments>
</comment>
<comment type="interaction">
    <interactant intactId="EBI-347996">
        <id>O43765</id>
    </interactant>
    <interactant intactId="EBI-3918971">
        <id>Q9Y680</id>
        <label>FKBP7</label>
    </interactant>
    <organismsDiffer>false</organismsDiffer>
    <experiments>6</experiments>
</comment>
<comment type="interaction">
    <interactant intactId="EBI-347996">
        <id>O43765</id>
    </interactant>
    <interactant intactId="EBI-2349801">
        <id>Q12841</id>
        <label>FSTL1</label>
    </interactant>
    <organismsDiffer>false</organismsDiffer>
    <experiments>3</experiments>
</comment>
<comment type="interaction">
    <interactant intactId="EBI-347996">
        <id>O43765</id>
    </interactant>
    <interactant intactId="EBI-13084584">
        <id>P54710-2</id>
        <label>FXYD2</label>
    </interactant>
    <organismsDiffer>false</organismsDiffer>
    <experiments>5</experiments>
</comment>
<comment type="interaction">
    <interactant intactId="EBI-347996">
        <id>O43765</id>
    </interactant>
    <interactant intactId="EBI-10216171">
        <id>P58549</id>
        <label>FXYD7</label>
    </interactant>
    <organismsDiffer>false</organismsDiffer>
    <experiments>8</experiments>
</comment>
<comment type="interaction">
    <interactant intactId="EBI-347996">
        <id>O43765</id>
    </interactant>
    <interactant intactId="EBI-746917">
        <id>O75084</id>
        <label>FZD7</label>
    </interactant>
    <organismsDiffer>false</organismsDiffer>
    <experiments>3</experiments>
</comment>
<comment type="interaction">
    <interactant intactId="EBI-347996">
        <id>O43765</id>
    </interactant>
    <interactant intactId="EBI-6624768">
        <id>P22466</id>
        <label>GAL</label>
    </interactant>
    <organismsDiffer>false</organismsDiffer>
    <experiments>6</experiments>
</comment>
<comment type="interaction">
    <interactant intactId="EBI-347996">
        <id>O43765</id>
    </interactant>
    <interactant intactId="EBI-12244186">
        <id>Q9UBC7</id>
        <label>GALP</label>
    </interactant>
    <organismsDiffer>false</organismsDiffer>
    <experiments>3</experiments>
</comment>
<comment type="interaction">
    <interactant intactId="EBI-347996">
        <id>O43765</id>
    </interactant>
    <interactant intactId="EBI-8588553">
        <id>P09681</id>
        <label>GIP</label>
    </interactant>
    <organismsDiffer>false</organismsDiffer>
    <experiments>6</experiments>
</comment>
<comment type="interaction">
    <interactant intactId="EBI-347996">
        <id>O43765</id>
    </interactant>
    <interactant intactId="EBI-10232920">
        <id>Q14440</id>
        <label>GPErik</label>
    </interactant>
    <organismsDiffer>false</organismsDiffer>
    <experiments>3</experiments>
</comment>
<comment type="interaction">
    <interactant intactId="EBI-347996">
        <id>O43765</id>
    </interactant>
    <interactant intactId="EBI-749411">
        <id>Q96SL4</id>
        <label>GPX7</label>
    </interactant>
    <organismsDiffer>false</organismsDiffer>
    <experiments>7</experiments>
</comment>
<comment type="interaction">
    <interactant intactId="EBI-347996">
        <id>O43765</id>
    </interactant>
    <interactant intactId="EBI-747754">
        <id>P28799</id>
        <label>GRN</label>
    </interactant>
    <organismsDiffer>false</organismsDiffer>
    <experiments>7</experiments>
</comment>
<comment type="interaction">
    <interactant intactId="EBI-347996">
        <id>O43765</id>
    </interactant>
    <interactant intactId="EBI-12244272">
        <id>Q02747</id>
        <label>GUCA2A</label>
    </interactant>
    <organismsDiffer>false</organismsDiffer>
    <experiments>8</experiments>
</comment>
<comment type="interaction">
    <interactant intactId="EBI-347996">
        <id>O43765</id>
    </interactant>
    <interactant intactId="EBI-12044847">
        <id>A0A0C4DFT7</id>
        <label>GYPA</label>
    </interactant>
    <organismsDiffer>false</organismsDiffer>
    <experiments>3</experiments>
</comment>
<comment type="interaction">
    <interactant intactId="EBI-347996">
        <id>O43765</id>
    </interactant>
    <interactant intactId="EBI-10176190">
        <id>B8Q183</id>
        <label>GYPA</label>
    </interactant>
    <organismsDiffer>false</organismsDiffer>
    <experiments>4</experiments>
</comment>
<comment type="interaction">
    <interactant intactId="EBI-347996">
        <id>O43765</id>
    </interactant>
    <interactant intactId="EBI-702665">
        <id>P02724</id>
        <label>GYPA</label>
    </interactant>
    <organismsDiffer>false</organismsDiffer>
    <experiments>3</experiments>
</comment>
<comment type="interaction">
    <interactant intactId="EBI-347996">
        <id>O43765</id>
    </interactant>
    <interactant intactId="EBI-750892">
        <id>P48723</id>
        <label>HSPA13</label>
    </interactant>
    <organismsDiffer>false</organismsDiffer>
    <experiments>8</experiments>
</comment>
<comment type="interaction">
    <interactant intactId="EBI-347996">
        <id>O43765</id>
    </interactant>
    <interactant intactId="EBI-1748945">
        <id>P46695</id>
        <label>IER3</label>
    </interactant>
    <organismsDiffer>false</organismsDiffer>
    <experiments>6</experiments>
</comment>
<comment type="interaction">
    <interactant intactId="EBI-347996">
        <id>O43765</id>
    </interactant>
    <interactant intactId="EBI-947015">
        <id>P24592</id>
        <label>IGFBP6</label>
    </interactant>
    <organismsDiffer>false</organismsDiffer>
    <experiments>3</experiments>
</comment>
<comment type="interaction">
    <interactant intactId="EBI-347996">
        <id>O43765</id>
    </interactant>
    <interactant intactId="EBI-6677651">
        <id>Q6PIQ7</id>
        <label>IGL@</label>
    </interactant>
    <organismsDiffer>false</organismsDiffer>
    <experiments>3</experiments>
</comment>
<comment type="interaction">
    <interactant intactId="EBI-347996">
        <id>O43765</id>
    </interactant>
    <interactant intactId="EBI-748681">
        <id>Q8N355</id>
        <label>IGL@</label>
    </interactant>
    <organismsDiffer>false</organismsDiffer>
    <experiments>4</experiments>
</comment>
<comment type="interaction">
    <interactant intactId="EBI-347996">
        <id>O43765</id>
    </interactant>
    <interactant intactId="EBI-1030834">
        <id>P40189</id>
        <label>IL6ST</label>
    </interactant>
    <organismsDiffer>false</organismsDiffer>
    <experiments>3</experiments>
</comment>
<comment type="interaction">
    <interactant intactId="EBI-347996">
        <id>O43765</id>
    </interactant>
    <interactant intactId="EBI-2650369">
        <id>Q14653</id>
        <label>IRF3</label>
    </interactant>
    <organismsDiffer>false</organismsDiffer>
    <experiments>3</experiments>
</comment>
<comment type="interaction">
    <interactant intactId="EBI-347996">
        <id>O43765</id>
    </interactant>
    <interactant intactId="EBI-3931258">
        <id>Q13568</id>
        <label>IRF5</label>
    </interactant>
    <organismsDiffer>false</organismsDiffer>
    <experiments>3</experiments>
</comment>
<comment type="interaction">
    <interactant intactId="EBI-347996">
        <id>O43765</id>
    </interactant>
    <interactant intactId="EBI-953819">
        <id>Q6GPH6</id>
        <label>ITPRIPL1</label>
    </interactant>
    <organismsDiffer>false</organismsDiffer>
    <experiments>3</experiments>
</comment>
<comment type="interaction">
    <interactant intactId="EBI-347996">
        <id>O43765</id>
    </interactant>
    <interactant intactId="EBI-12337095">
        <id>Q6GPH6-2</id>
        <label>ITPRIPL1</label>
    </interactant>
    <organismsDiffer>false</organismsDiffer>
    <experiments>3</experiments>
</comment>
<comment type="interaction">
    <interactant intactId="EBI-347996">
        <id>O43765</id>
    </interactant>
    <interactant intactId="EBI-749265">
        <id>Q8N6L0</id>
        <label>KASH5</label>
    </interactant>
    <organismsDiffer>false</organismsDiffer>
    <experiments>8</experiments>
</comment>
<comment type="interaction">
    <interactant intactId="EBI-347996">
        <id>O43765</id>
    </interactant>
    <interactant intactId="EBI-8286599">
        <id>Q09470</id>
        <label>KCNA1</label>
    </interactant>
    <organismsDiffer>false</organismsDiffer>
    <experiments>3</experiments>
</comment>
<comment type="interaction">
    <interactant intactId="EBI-347996">
        <id>O43765</id>
    </interactant>
    <interactant intactId="EBI-12265328">
        <id>Q16322</id>
        <label>KCNA10</label>
    </interactant>
    <organismsDiffer>false</organismsDiffer>
    <experiments>3</experiments>
</comment>
<comment type="interaction">
    <interactant intactId="EBI-347996">
        <id>O43765</id>
    </interactant>
    <interactant intactId="EBI-11981259">
        <id>Q9UJ90</id>
        <label>KCNE5</label>
    </interactant>
    <organismsDiffer>false</organismsDiffer>
    <experiments>3</experiments>
</comment>
<comment type="interaction">
    <interactant intactId="EBI-347996">
        <id>O43765</id>
    </interactant>
    <interactant intactId="EBI-702198">
        <id>P02538</id>
        <label>KRT6A</label>
    </interactant>
    <organismsDiffer>false</organismsDiffer>
    <experiments>3</experiments>
</comment>
<comment type="interaction">
    <interactant intactId="EBI-347996">
        <id>O43765</id>
    </interactant>
    <interactant intactId="EBI-359761">
        <id>Q86UP2</id>
        <label>KTN1</label>
    </interactant>
    <organismsDiffer>false</organismsDiffer>
    <experiments>3</experiments>
</comment>
<comment type="interaction">
    <interactant intactId="EBI-347996">
        <id>O43765</id>
    </interactant>
    <interactant intactId="EBI-12007212">
        <id>Q86UP2-3</id>
        <label>KTN1</label>
    </interactant>
    <organismsDiffer>false</organismsDiffer>
    <experiments>3</experiments>
</comment>
<comment type="interaction">
    <interactant intactId="EBI-347996">
        <id>O43765</id>
    </interactant>
    <interactant intactId="EBI-10250491">
        <id>Q6ISS4</id>
        <label>LAIR2</label>
    </interactant>
    <organismsDiffer>false</organismsDiffer>
    <experiments>6</experiments>
</comment>
<comment type="interaction">
    <interactant intactId="EBI-347996">
        <id>O43765</id>
    </interactant>
    <interactant intactId="EBI-1222766">
        <id>O43561</id>
        <label>LAT</label>
    </interactant>
    <organismsDiffer>false</organismsDiffer>
    <experiments>3</experiments>
</comment>
<comment type="interaction">
    <interactant intactId="EBI-347996">
        <id>O43765</id>
    </interactant>
    <interactant intactId="EBI-8070286">
        <id>O43561-2</id>
        <label>LAT</label>
    </interactant>
    <organismsDiffer>false</organismsDiffer>
    <experiments>3</experiments>
</comment>
<comment type="interaction">
    <interactant intactId="EBI-347996">
        <id>O43765</id>
    </interactant>
    <interactant intactId="EBI-11911016">
        <id>P80188</id>
        <label>LCN2</label>
    </interactant>
    <organismsDiffer>false</organismsDiffer>
    <experiments>5</experiments>
</comment>
<comment type="interaction">
    <interactant intactId="EBI-347996">
        <id>O43765</id>
    </interactant>
    <interactant intactId="EBI-13302279">
        <id>O15165-2</id>
        <label>LDLRAD4</label>
    </interactant>
    <organismsDiffer>false</organismsDiffer>
    <experiments>3</experiments>
</comment>
<comment type="interaction">
    <interactant intactId="EBI-347996">
        <id>O43765</id>
    </interactant>
    <interactant intactId="EBI-10264855">
        <id>Q8N112</id>
        <label>LSMEM2</label>
    </interactant>
    <organismsDiffer>false</organismsDiffer>
    <experiments>3</experiments>
</comment>
<comment type="interaction">
    <interactant intactId="EBI-347996">
        <id>O43765</id>
    </interactant>
    <interactant intactId="EBI-9537218">
        <id>Q96G30</id>
        <label>MRAP2</label>
    </interactant>
    <organismsDiffer>false</organismsDiffer>
    <experiments>6</experiments>
</comment>
<comment type="interaction">
    <interactant intactId="EBI-347996">
        <id>O43765</id>
    </interactant>
    <interactant intactId="EBI-12806656">
        <id>Q96HJ5</id>
        <label>MS4A3</label>
    </interactant>
    <organismsDiffer>false</organismsDiffer>
    <experiments>3</experiments>
</comment>
<comment type="interaction">
    <interactant intactId="EBI-347996">
        <id>O43765</id>
    </interactant>
    <interactant intactId="EBI-10195681">
        <id>P08118</id>
        <label>MSMB</label>
    </interactant>
    <organismsDiffer>false</organismsDiffer>
    <experiments>3</experiments>
</comment>
<comment type="interaction">
    <interactant intactId="EBI-347996">
        <id>O43765</id>
    </interactant>
    <interactant intactId="EBI-718622">
        <id>Q969H8</id>
        <label>MYDGF</label>
    </interactant>
    <organismsDiffer>false</organismsDiffer>
    <experiments>8</experiments>
</comment>
<comment type="interaction">
    <interactant intactId="EBI-347996">
        <id>O43765</id>
    </interactant>
    <interactant intactId="EBI-11692272">
        <id>Q99972</id>
        <label>MYOC</label>
    </interactant>
    <organismsDiffer>false</organismsDiffer>
    <experiments>3</experiments>
</comment>
<comment type="interaction">
    <interactant intactId="EBI-347996">
        <id>O43765</id>
    </interactant>
    <interactant intactId="EBI-8650724">
        <id>Q8IW45</id>
        <label>NAXD</label>
    </interactant>
    <organismsDiffer>false</organismsDiffer>
    <experiments>7</experiments>
</comment>
<comment type="interaction">
    <interactant intactId="EBI-347996">
        <id>O43765</id>
    </interactant>
    <interactant intactId="EBI-713684">
        <id>Q13232</id>
        <label>NME3</label>
    </interactant>
    <organismsDiffer>false</organismsDiffer>
    <experiments>12</experiments>
</comment>
<comment type="interaction">
    <interactant intactId="EBI-347996">
        <id>O43765</id>
    </interactant>
    <interactant intactId="EBI-1753111">
        <id>Q9HCQ7</id>
        <label>NPVF</label>
    </interactant>
    <organismsDiffer>false</organismsDiffer>
    <experiments>3</experiments>
</comment>
<comment type="interaction">
    <interactant intactId="EBI-347996">
        <id>O43765</id>
    </interactant>
    <interactant intactId="EBI-724857">
        <id>Q9GZP1</id>
        <label>NRSN2</label>
    </interactant>
    <organismsDiffer>false</organismsDiffer>
    <experiments>3</experiments>
</comment>
<comment type="interaction">
    <interactant intactId="EBI-347996">
        <id>O43765</id>
    </interactant>
    <interactant intactId="EBI-10244544">
        <id>Q5JUK9</id>
        <label>PAGE3</label>
    </interactant>
    <organismsDiffer>false</organismsDiffer>
    <experiments>6</experiments>
</comment>
<comment type="interaction">
    <interactant intactId="EBI-347996">
        <id>O43765</id>
    </interactant>
    <interactant intactId="EBI-740845">
        <id>Q96AQ6</id>
        <label>PBXIP1</label>
    </interactant>
    <organismsDiffer>false</organismsDiffer>
    <experiments>4</experiments>
</comment>
<comment type="interaction">
    <interactant intactId="EBI-347996">
        <id>O43765</id>
    </interactant>
    <interactant intactId="EBI-712273">
        <id>Q9UN74</id>
        <label>PCDHA4</label>
    </interactant>
    <organismsDiffer>false</organismsDiffer>
    <experiments>3</experiments>
</comment>
<comment type="interaction">
    <interactant intactId="EBI-347996">
        <id>O43765</id>
    </interactant>
    <interactant intactId="EBI-12956949">
        <id>Q9Y5G9</id>
        <label>PCDHGA4</label>
    </interactant>
    <organismsDiffer>false</organismsDiffer>
    <experiments>3</experiments>
</comment>
<comment type="interaction">
    <interactant intactId="EBI-347996">
        <id>O43765</id>
    </interactant>
    <interactant intactId="EBI-12758027">
        <id>Q96PD5-2</id>
        <label>PGLYRP2</label>
    </interactant>
    <organismsDiffer>false</organismsDiffer>
    <experiments>3</experiments>
</comment>
<comment type="interaction">
    <interactant intactId="EBI-347996">
        <id>O43765</id>
    </interactant>
    <interactant intactId="EBI-10323452">
        <id>Q9UL19</id>
        <label>PLAAT4</label>
    </interactant>
    <organismsDiffer>false</organismsDiffer>
    <experiments>4</experiments>
</comment>
<comment type="interaction">
    <interactant intactId="EBI-347996">
        <id>O43765</id>
    </interactant>
    <interactant intactId="EBI-13318883">
        <id>Q969W9-2</id>
        <label>PMEPA1</label>
    </interactant>
    <organismsDiffer>false</organismsDiffer>
    <experiments>3</experiments>
</comment>
<comment type="interaction">
    <interactant intactId="EBI-347996">
        <id>O43765</id>
    </interactant>
    <interactant intactId="EBI-359252">
        <id>P23284</id>
        <label>PPIB</label>
    </interactant>
    <organismsDiffer>false</organismsDiffer>
    <experiments>6</experiments>
</comment>
<comment type="interaction">
    <interactant intactId="EBI-347996">
        <id>O43765</id>
    </interactant>
    <interactant intactId="EBI-953909">
        <id>P45877</id>
        <label>PPIC</label>
    </interactant>
    <organismsDiffer>false</organismsDiffer>
    <experiments>6</experiments>
</comment>
<comment type="interaction">
    <interactant intactId="EBI-347996">
        <id>O43765</id>
    </interactant>
    <interactant intactId="EBI-2116102">
        <id>Q96NZ9</id>
        <label>PRAP1</label>
    </interactant>
    <organismsDiffer>false</organismsDiffer>
    <experiments>9</experiments>
</comment>
<comment type="interaction">
    <interactant intactId="EBI-347996">
        <id>O43765</id>
    </interactant>
    <interactant intactId="EBI-10272071">
        <id>Q8TAS3</id>
        <label>PRRG2</label>
    </interactant>
    <organismsDiffer>false</organismsDiffer>
    <experiments>3</experiments>
</comment>
<comment type="interaction">
    <interactant intactId="EBI-347996">
        <id>O43765</id>
    </interactant>
    <interactant intactId="EBI-11974061">
        <id>Q9UIG4</id>
        <label>PSORS1C2</label>
    </interactant>
    <organismsDiffer>false</organismsDiffer>
    <experiments>5</experiments>
</comment>
<comment type="interaction">
    <interactant intactId="EBI-347996">
        <id>O43765</id>
    </interactant>
    <interactant intactId="EBI-948278">
        <id>Q15293</id>
        <label>RCN1</label>
    </interactant>
    <organismsDiffer>false</organismsDiffer>
    <experiments>3</experiments>
</comment>
<comment type="interaction">
    <interactant intactId="EBI-347996">
        <id>O43765</id>
    </interactant>
    <interactant intactId="EBI-12423312">
        <id>Q5GAN6</id>
        <label>RNASE10</label>
    </interactant>
    <organismsDiffer>false</organismsDiffer>
    <experiments>5</experiments>
</comment>
<comment type="interaction">
    <interactant intactId="EBI-347996">
        <id>O43765</id>
    </interactant>
    <interactant intactId="EBI-2340657">
        <id>P50876</id>
        <label>RNF144A</label>
    </interactant>
    <organismsDiffer>false</organismsDiffer>
    <experiments>3</experiments>
</comment>
<comment type="interaction">
    <interactant intactId="EBI-347996">
        <id>O43765</id>
    </interactant>
    <interactant intactId="EBI-12055631">
        <id>Q96K19-5</id>
        <label>RNF170</label>
    </interactant>
    <organismsDiffer>false</organismsDiffer>
    <experiments>3</experiments>
</comment>
<comment type="interaction">
    <interactant intactId="EBI-347996">
        <id>O43765</id>
    </interactant>
    <interactant intactId="EBI-355963">
        <id>P04843</id>
        <label>RPN1</label>
    </interactant>
    <organismsDiffer>false</organismsDiffer>
    <experiments>7</experiments>
</comment>
<comment type="interaction">
    <interactant intactId="EBI-347996">
        <id>O43765</id>
    </interactant>
    <interactant intactId="EBI-3913237">
        <id>P31431</id>
        <label>SDC4</label>
    </interactant>
    <organismsDiffer>false</organismsDiffer>
    <experiments>6</experiments>
</comment>
<comment type="interaction">
    <interactant intactId="EBI-347996">
        <id>O43765</id>
    </interactant>
    <interactant intactId="EBI-2339921">
        <id>Q9HCN8</id>
        <label>SDF2L1</label>
    </interactant>
    <organismsDiffer>false</organismsDiffer>
    <experiments>3</experiments>
</comment>
<comment type="interaction">
    <interactant intactId="EBI-347996">
        <id>O43765</id>
    </interactant>
    <interactant intactId="EBI-953978">
        <id>P05121</id>
        <label>SERPINE1</label>
    </interactant>
    <organismsDiffer>false</organismsDiffer>
    <experiments>6</experiments>
</comment>
<comment type="interaction">
    <interactant intactId="EBI-347996">
        <id>O43765</id>
    </interactant>
    <interactant intactId="EBI-750144">
        <id>O75830</id>
        <label>SERPINI2</label>
    </interactant>
    <organismsDiffer>false</organismsDiffer>
    <experiments>3</experiments>
</comment>
<comment type="interaction">
    <interactant intactId="EBI-347996">
        <id>O43765</id>
    </interactant>
    <interactant intactId="EBI-5663553">
        <id>Q16586</id>
        <label>SGCA</label>
    </interactant>
    <organismsDiffer>false</organismsDiffer>
    <experiments>13</experiments>
</comment>
<comment type="interaction">
    <interactant intactId="EBI-347996">
        <id>O43765</id>
    </interactant>
    <interactant intactId="EBI-16434133">
        <id>Q16586-2</id>
        <label>SGCA</label>
    </interactant>
    <organismsDiffer>false</organismsDiffer>
    <experiments>4</experiments>
</comment>
<comment type="interaction">
    <interactant intactId="EBI-347996">
        <id>O43765</id>
    </interactant>
    <interactant intactId="EBI-347996">
        <id>O43765</id>
        <label>SGTA</label>
    </interactant>
    <organismsDiffer>false</organismsDiffer>
    <experiments>4</experiments>
</comment>
<comment type="interaction">
    <interactant intactId="EBI-347996">
        <id>O43765</id>
    </interactant>
    <interactant intactId="EBI-744081">
        <id>Q96EQ0</id>
        <label>SGTB</label>
    </interactant>
    <organismsDiffer>false</organismsDiffer>
    <experiments>3</experiments>
</comment>
<comment type="interaction">
    <interactant intactId="EBI-347996">
        <id>O43765</id>
    </interactant>
    <interactant intactId="EBI-18035902">
        <id>Q96DD7</id>
        <label>SHISA4</label>
    </interactant>
    <organismsDiffer>false</organismsDiffer>
    <experiments>3</experiments>
</comment>
<comment type="interaction">
    <interactant intactId="EBI-347996">
        <id>O43765</id>
    </interactant>
    <interactant intactId="EBI-13369834">
        <id>Q8N114-3</id>
        <label>SHISA5</label>
    </interactant>
    <organismsDiffer>false</organismsDiffer>
    <experiments>3</experiments>
</comment>
<comment type="interaction">
    <interactant intactId="EBI-347996">
        <id>O43765</id>
    </interactant>
    <interactant intactId="EBI-355293">
        <id>P03973</id>
        <label>SLPI</label>
    </interactant>
    <organismsDiffer>false</organismsDiffer>
    <experiments>6</experiments>
</comment>
<comment type="interaction">
    <interactant intactId="EBI-347996">
        <id>O43765</id>
    </interactant>
    <interactant intactId="EBI-10226799">
        <id>Q0VAQ4</id>
        <label>SMAGP</label>
    </interactant>
    <organismsDiffer>false</organismsDiffer>
    <experiments>3</experiments>
</comment>
<comment type="interaction">
    <interactant intactId="EBI-347996">
        <id>O43765</id>
    </interactant>
    <interactant intactId="EBI-373430">
        <id>Q96QK8</id>
        <label>SMIM14</label>
    </interactant>
    <organismsDiffer>false</organismsDiffer>
    <experiments>3</experiments>
</comment>
<comment type="interaction">
    <interactant intactId="EBI-347996">
        <id>O43765</id>
    </interactant>
    <interactant intactId="EBI-12334905">
        <id>Q71RC9</id>
        <label>SMIM5</label>
    </interactant>
    <organismsDiffer>false</organismsDiffer>
    <experiments>9</experiments>
</comment>
<comment type="interaction">
    <interactant intactId="EBI-347996">
        <id>O43765</id>
    </interactant>
    <interactant intactId="EBI-10195782">
        <id>P08294</id>
        <label>SOD3</label>
    </interactant>
    <organismsDiffer>false</organismsDiffer>
    <experiments>3</experiments>
</comment>
<comment type="interaction">
    <interactant intactId="EBI-347996">
        <id>O43765</id>
    </interactant>
    <interactant intactId="EBI-13119580">
        <id>Q5DT21</id>
        <label>SPINK9</label>
    </interactant>
    <organismsDiffer>false</organismsDiffer>
    <experiments>3</experiments>
</comment>
<comment type="interaction">
    <interactant intactId="EBI-347996">
        <id>O43765</id>
    </interactant>
    <interactant intactId="EBI-10049055">
        <id>P16150</id>
        <label>SPN</label>
    </interactant>
    <organismsDiffer>false</organismsDiffer>
    <experiments>5</experiments>
</comment>
<comment type="interaction">
    <interactant intactId="EBI-347996">
        <id>O43765</id>
    </interactant>
    <interactant intactId="EBI-723648">
        <id>P10451</id>
        <label>SPP1</label>
    </interactant>
    <organismsDiffer>false</organismsDiffer>
    <experiments>8</experiments>
</comment>
<comment type="interaction">
    <interactant intactId="EBI-347996">
        <id>O43765</id>
    </interactant>
    <interactant intactId="EBI-750784">
        <id>Q8TCT8</id>
        <label>SPPL2A</label>
    </interactant>
    <organismsDiffer>false</organismsDiffer>
    <experiments>7</experiments>
</comment>
<comment type="interaction">
    <interactant intactId="EBI-347996">
        <id>O43765</id>
    </interactant>
    <interactant intactId="EBI-744915">
        <id>P10124</id>
        <label>SRGN</label>
    </interactant>
    <organismsDiffer>false</organismsDiffer>
    <experiments>10</experiments>
</comment>
<comment type="interaction">
    <interactant intactId="EBI-347996">
        <id>O43765</id>
    </interactant>
    <interactant intactId="EBI-12304565">
        <id>Q86TD4-2</id>
        <label>SRL</label>
    </interactant>
    <organismsDiffer>false</organismsDiffer>
    <experiments>3</experiments>
</comment>
<comment type="interaction">
    <interactant intactId="EBI-347996">
        <id>O43765</id>
    </interactant>
    <interactant intactId="EBI-18397783">
        <id>E0CX11</id>
        <label>STMP1</label>
    </interactant>
    <organismsDiffer>false</organismsDiffer>
    <experiments>3</experiments>
</comment>
<comment type="interaction">
    <interactant intactId="EBI-347996">
        <id>O43765</id>
    </interactant>
    <interactant intactId="EBI-3921347">
        <id>P51687</id>
        <label>SUOX</label>
    </interactant>
    <organismsDiffer>false</organismsDiffer>
    <experiments>3</experiments>
</comment>
<comment type="interaction">
    <interactant intactId="EBI-347996">
        <id>O43765</id>
    </interactant>
    <interactant intactId="EBI-751770">
        <id>Q9BT88</id>
        <label>SYT11</label>
    </interactant>
    <organismsDiffer>false</organismsDiffer>
    <experiments>7</experiments>
</comment>
<comment type="interaction">
    <interactant intactId="EBI-347996">
        <id>O43765</id>
    </interactant>
    <interactant intactId="EBI-751132">
        <id>Q9H2B2</id>
        <label>SYT4</label>
    </interactant>
    <organismsDiffer>false</organismsDiffer>
    <experiments>7</experiments>
</comment>
<comment type="interaction">
    <interactant intactId="EBI-347996">
        <id>O43765</id>
    </interactant>
    <interactant intactId="EBI-10224676">
        <id>Q07654</id>
        <label>TFF3</label>
    </interactant>
    <organismsDiffer>false</organismsDiffer>
    <experiments>3</experiments>
</comment>
<comment type="interaction">
    <interactant intactId="EBI-347996">
        <id>O43765</id>
    </interactant>
    <interactant intactId="EBI-355727">
        <id>P02786</id>
        <label>TFRC</label>
    </interactant>
    <organismsDiffer>false</organismsDiffer>
    <experiments>6</experiments>
</comment>
<comment type="interaction">
    <interactant intactId="EBI-347996">
        <id>O43765</id>
    </interactant>
    <interactant intactId="EBI-1034374">
        <id>P01135</id>
        <label>TGFA</label>
    </interactant>
    <organismsDiffer>false</organismsDiffer>
    <experiments>3</experiments>
</comment>
<comment type="interaction">
    <interactant intactId="EBI-347996">
        <id>O43765</id>
    </interactant>
    <interactant intactId="EBI-12367411">
        <id>P01135-2</id>
        <label>TGFA</label>
    </interactant>
    <organismsDiffer>false</organismsDiffer>
    <experiments>6</experiments>
</comment>
<comment type="interaction">
    <interactant intactId="EBI-347996">
        <id>O43765</id>
    </interactant>
    <interactant intactId="EBI-13329239">
        <id>Q6P9G4</id>
        <label>TMEM154</label>
    </interactant>
    <organismsDiffer>false</organismsDiffer>
    <experiments>3</experiments>
</comment>
<comment type="interaction">
    <interactant intactId="EBI-347996">
        <id>O43765</id>
    </interactant>
    <interactant intactId="EBI-10276729">
        <id>Q8WUU8</id>
        <label>TMEM174</label>
    </interactant>
    <organismsDiffer>false</organismsDiffer>
    <experiments>6</experiments>
</comment>
<comment type="interaction">
    <interactant intactId="EBI-347996">
        <id>O43765</id>
    </interactant>
    <interactant intactId="EBI-17546822">
        <id>Q96A57-2</id>
        <label>TMEM230</label>
    </interactant>
    <organismsDiffer>false</organismsDiffer>
    <experiments>3</experiments>
</comment>
<comment type="interaction">
    <interactant intactId="EBI-347996">
        <id>O43765</id>
    </interactant>
    <interactant intactId="EBI-10244617">
        <id>Q5JXX7</id>
        <label>TMEM31</label>
    </interactant>
    <organismsDiffer>false</organismsDiffer>
    <experiments>3</experiments>
</comment>
<comment type="interaction">
    <interactant intactId="EBI-347996">
        <id>O43765</id>
    </interactant>
    <interactant intactId="EBI-7333781">
        <id>Q9Y2Y6</id>
        <label>TMEM98</label>
    </interactant>
    <organismsDiffer>false</organismsDiffer>
    <experiments>3</experiments>
</comment>
<comment type="interaction">
    <interactant intactId="EBI-347996">
        <id>O43765</id>
    </interactant>
    <interactant intactId="EBI-7639969">
        <id>O60235</id>
        <label>TMPRSS11D</label>
    </interactant>
    <organismsDiffer>false</organismsDiffer>
    <experiments>3</experiments>
</comment>
<comment type="interaction">
    <interactant intactId="EBI-347996">
        <id>O43765</id>
    </interactant>
    <interactant intactId="EBI-2820477">
        <id>Q71RG4</id>
        <label>TMUB2</label>
    </interactant>
    <organismsDiffer>false</organismsDiffer>
    <experiments>3</experiments>
</comment>
<comment type="interaction">
    <interactant intactId="EBI-347996">
        <id>O43765</id>
    </interactant>
    <interactant intactId="EBI-717441">
        <id>O14798</id>
        <label>TNFRSF10C</label>
    </interactant>
    <organismsDiffer>false</organismsDiffer>
    <experiments>3</experiments>
</comment>
<comment type="interaction">
    <interactant intactId="EBI-347996">
        <id>O43765</id>
    </interactant>
    <interactant intactId="EBI-519160">
        <id>O14836</id>
        <label>TNFRSF13B</label>
    </interactant>
    <organismsDiffer>false</organismsDiffer>
    <experiments>3</experiments>
</comment>
<comment type="interaction">
    <interactant intactId="EBI-347996">
        <id>O43765</id>
    </interactant>
    <interactant intactId="EBI-12023110">
        <id>O14836-2</id>
        <label>TNFRSF13B</label>
    </interactant>
    <organismsDiffer>false</organismsDiffer>
    <experiments>8</experiments>
</comment>
<comment type="interaction">
    <interactant intactId="EBI-347996">
        <id>O43765</id>
    </interactant>
    <interactant intactId="EBI-12089038">
        <id>Q9NS68-2</id>
        <label>TNFRSF19</label>
    </interactant>
    <organismsDiffer>false</organismsDiffer>
    <experiments>3</experiments>
</comment>
<comment type="interaction">
    <interactant intactId="EBI-347996">
        <id>O43765</id>
    </interactant>
    <interactant intactId="EBI-2313231">
        <id>O75509</id>
        <label>TNFRSF21</label>
    </interactant>
    <organismsDiffer>false</organismsDiffer>
    <experiments>3</experiments>
</comment>
<comment type="interaction">
    <interactant intactId="EBI-347996">
        <id>O43765</id>
    </interactant>
    <interactant intactId="EBI-6932080">
        <id>O43508</id>
        <label>TNFSF12</label>
    </interactant>
    <organismsDiffer>false</organismsDiffer>
    <experiments>3</experiments>
</comment>
<comment type="interaction">
    <interactant intactId="EBI-347996">
        <id>O43765</id>
    </interactant>
    <interactant intactId="EBI-12840050">
        <id>Q9C035-3</id>
        <label>TRIM5</label>
    </interactant>
    <organismsDiffer>false</organismsDiffer>
    <experiments>3</experiments>
</comment>
<comment type="interaction">
    <interactant intactId="EBI-347996">
        <id>O43765</id>
    </interactant>
    <interactant intactId="EBI-10243654">
        <id>Q5BVD1</id>
        <label>TTMP</label>
    </interactant>
    <organismsDiffer>false</organismsDiffer>
    <experiments>6</experiments>
</comment>
<comment type="interaction">
    <interactant intactId="EBI-347996">
        <id>O43765</id>
    </interactant>
    <interactant intactId="EBI-10304067">
        <id>Q9GZX9</id>
        <label>TWSG1</label>
    </interactant>
    <organismsDiffer>false</organismsDiffer>
    <experiments>3</experiments>
</comment>
<comment type="interaction">
    <interactant intactId="EBI-347996">
        <id>O43765</id>
    </interactant>
    <interactant intactId="EBI-2564581">
        <id>O95881</id>
        <label>TXNDC12</label>
    </interactant>
    <organismsDiffer>false</organismsDiffer>
    <experiments>3</experiments>
</comment>
<comment type="interaction">
    <interactant intactId="EBI-347996">
        <id>O43765</id>
    </interactant>
    <interactant intactId="EBI-356983">
        <id>P11441</id>
        <label>UBL4A</label>
    </interactant>
    <organismsDiffer>false</organismsDiffer>
    <experiments>5</experiments>
</comment>
<comment type="interaction">
    <interactant intactId="EBI-347996">
        <id>O43765</id>
    </interactant>
    <interactant intactId="EBI-947187">
        <id>Q9UHD9</id>
        <label>UBQLN2</label>
    </interactant>
    <organismsDiffer>false</organismsDiffer>
    <experiments>3</experiments>
</comment>
<comment type="interaction">
    <interactant intactId="EBI-347996">
        <id>O43765</id>
    </interactant>
    <interactant intactId="EBI-10188907">
        <id>O75631</id>
        <label>UPK3A</label>
    </interactant>
    <organismsDiffer>false</organismsDiffer>
    <experiments>3</experiments>
</comment>
<comment type="interaction">
    <interactant intactId="EBI-347996">
        <id>O43765</id>
    </interactant>
    <interactant intactId="EBI-751454">
        <id>P01282</id>
        <label>VIP</label>
    </interactant>
    <organismsDiffer>false</organismsDiffer>
    <experiments>3</experiments>
</comment>
<comment type="interaction">
    <interactant intactId="EBI-347996">
        <id>O43765</id>
    </interactant>
    <interactant intactId="EBI-10316321">
        <id>Q9NX94</id>
        <label>WBP1L</label>
    </interactant>
    <organismsDiffer>false</organismsDiffer>
    <experiments>3</experiments>
</comment>
<comment type="interaction">
    <interactant intactId="EBI-347996">
        <id>O43765</id>
    </interactant>
    <interactant intactId="EBI-11958577">
        <id>Q8WWY7</id>
        <label>WFDC12</label>
    </interactant>
    <organismsDiffer>false</organismsDiffer>
    <experiments>3</experiments>
</comment>
<comment type="interaction">
    <interactant intactId="EBI-347996">
        <id>O43765</id>
    </interactant>
    <interactant intactId="EBI-12041955">
        <id>Q8IUB5</id>
        <label>WFDC13</label>
    </interactant>
    <organismsDiffer>false</organismsDiffer>
    <experiments>5</experiments>
</comment>
<comment type="interaction">
    <interactant intactId="EBI-347996">
        <id>O43765</id>
    </interactant>
    <interactant intactId="EBI-12175871">
        <id>Q8TCV5</id>
        <label>WFDC5</label>
    </interactant>
    <organismsDiffer>false</organismsDiffer>
    <experiments>3</experiments>
</comment>
<comment type="interaction">
    <interactant intactId="EBI-347996">
        <id>O43765</id>
    </interactant>
    <interactant intactId="EBI-17494306">
        <id>Q8NAP8</id>
        <label>ZBTB8B</label>
    </interactant>
    <organismsDiffer>false</organismsDiffer>
    <experiments>3</experiments>
</comment>
<comment type="interaction">
    <interactant intactId="EBI-347996">
        <id>O43765</id>
    </interactant>
    <interactant intactId="EBI-746479">
        <id>O60844</id>
        <label>ZG16</label>
    </interactant>
    <organismsDiffer>false</organismsDiffer>
    <experiments>12</experiments>
</comment>
<comment type="interaction">
    <interactant intactId="EBI-347996">
        <id>O43765</id>
    </interactant>
    <interactant intactId="EBI-953824">
        <id>Q96DA0</id>
        <label>ZG16B</label>
    </interactant>
    <organismsDiffer>false</organismsDiffer>
    <experiments>6</experiments>
</comment>
<comment type="interaction">
    <interactant intactId="EBI-347996">
        <id>O43765</id>
    </interactant>
    <interactant intactId="EBI-17234977">
        <id>A0A1U9X8X8</id>
    </interactant>
    <organismsDiffer>false</organismsDiffer>
    <experiments>3</experiments>
</comment>
<comment type="interaction">
    <interactant intactId="EBI-347996">
        <id>O43765</id>
    </interactant>
    <interactant intactId="EBI-25492879">
        <id>P59635</id>
        <label>7a</label>
    </interactant>
    <organismsDiffer>true</organismsDiffer>
    <experiments>3</experiments>
</comment>
<comment type="interaction">
    <interactant intactId="EBI-347996">
        <id>O43765</id>
    </interactant>
    <interactant intactId="EBI-25475914">
        <id>P0DTD8</id>
        <label>7b</label>
    </interactant>
    <organismsDiffer>true</organismsDiffer>
    <experiments>3</experiments>
</comment>
<comment type="interaction">
    <interactant intactId="EBI-347996">
        <id>O43765</id>
    </interactant>
    <interactant intactId="EBI-25475917">
        <id>P0DTD3</id>
        <label>9c</label>
    </interactant>
    <organismsDiffer>true</organismsDiffer>
    <experiments>3</experiments>
</comment>
<comment type="subcellular location">
    <subcellularLocation>
        <location evidence="4">Cytoplasm</location>
    </subcellularLocation>
    <subcellularLocation>
        <location evidence="4">Nucleus</location>
    </subcellularLocation>
    <text evidence="4">Co-localizes with HSP90AB1 in the cytoplasm. Increased nuclear accumulation seen during cell apoptosis.</text>
</comment>
<comment type="tissue specificity">
    <text>Ubiquitous.</text>
</comment>
<comment type="domain">
    <text>The second tetratricopeptide repeat (TPR 2) mediates the interaction with SARS-CoV accessory protein 7a.</text>
</comment>
<comment type="similarity">
    <text evidence="15">Belongs to the SGT family.</text>
</comment>
<protein>
    <recommendedName>
        <fullName>Small glutamine-rich tetratricopeptide repeat-containing protein alpha</fullName>
    </recommendedName>
    <alternativeName>
        <fullName>Alpha-SGT</fullName>
    </alternativeName>
    <alternativeName>
        <fullName>Vpu-binding protein</fullName>
        <shortName>UBP</shortName>
    </alternativeName>
</protein>
<proteinExistence type="evidence at protein level"/>
<reference key="1">
    <citation type="journal article" date="1998" name="Genomics">
        <title>Isolation and characterization of human SGT and identification of homologues in Saccharomyces cerevisiae and Caenorhabditis elegans.</title>
        <authorList>
            <person name="Kordes E."/>
            <person name="Savelyeva L."/>
            <person name="Schwab M."/>
            <person name="Rommelaere J."/>
            <person name="Jauniaux J.-C."/>
            <person name="Cziepluch C."/>
        </authorList>
    </citation>
    <scope>NUCLEOTIDE SEQUENCE [MRNA]</scope>
</reference>
<reference key="2">
    <citation type="journal article" date="1999" name="J. Biol. Chem.">
        <title>Specific interaction of the 70-kDa heat shock cognate protein with the tetratricopeptide repeats.</title>
        <authorList>
            <person name="Liu F.H."/>
            <person name="Wu S.J."/>
            <person name="Hu S.M."/>
            <person name="Hsiao C.D."/>
            <person name="Wang C."/>
        </authorList>
    </citation>
    <scope>NUCLEOTIDE SEQUENCE [MRNA]</scope>
</reference>
<reference key="3">
    <citation type="journal article" date="1998" name="J. Virol.">
        <title>Functional interaction of human immunodeficiency virus type 1 Vpu and Gag with a novel member of the tetratricopeptide repeat protein family.</title>
        <authorList>
            <person name="Callahan M.A."/>
            <person name="Handley M.A."/>
            <person name="Lee Y.H."/>
            <person name="Talbot K.J."/>
            <person name="Harper J.W."/>
            <person name="Panganiban A.T."/>
        </authorList>
    </citation>
    <scope>NUCLEOTIDE SEQUENCE [MRNA]</scope>
    <scope>INTERACTION WITH HIV-1V PU AND GAG (MICROBIAL INFECTION)</scope>
</reference>
<reference key="4">
    <citation type="submission" date="2001-04" db="EMBL/GenBank/DDBJ databases">
        <authorList>
            <person name="Tobaben S."/>
            <person name="Stahl B."/>
        </authorList>
    </citation>
    <scope>NUCLEOTIDE SEQUENCE [MRNA]</scope>
</reference>
<reference key="5">
    <citation type="journal article" date="2001" name="Genome Res.">
        <title>Towards a catalog of human genes and proteins: sequencing and analysis of 500 novel complete protein coding human cDNAs.</title>
        <authorList>
            <person name="Wiemann S."/>
            <person name="Weil B."/>
            <person name="Wellenreuther R."/>
            <person name="Gassenhuber J."/>
            <person name="Glassl S."/>
            <person name="Ansorge W."/>
            <person name="Boecher M."/>
            <person name="Bloecker H."/>
            <person name="Bauersachs S."/>
            <person name="Blum H."/>
            <person name="Lauber J."/>
            <person name="Duesterhoeft A."/>
            <person name="Beyer A."/>
            <person name="Koehrer K."/>
            <person name="Strack N."/>
            <person name="Mewes H.-W."/>
            <person name="Ottenwaelder B."/>
            <person name="Obermaier B."/>
            <person name="Tampe J."/>
            <person name="Heubner D."/>
            <person name="Wambutt R."/>
            <person name="Korn B."/>
            <person name="Klein M."/>
            <person name="Poustka A."/>
        </authorList>
    </citation>
    <scope>NUCLEOTIDE SEQUENCE [LARGE SCALE MRNA]</scope>
    <source>
        <tissue>Uterus</tissue>
    </source>
</reference>
<reference key="6">
    <citation type="submission" date="2004-06" db="EMBL/GenBank/DDBJ databases">
        <title>Cloning of human full open reading frames in Gateway(TM) system entry vector (pDONR201).</title>
        <authorList>
            <person name="Halleck A."/>
            <person name="Ebert L."/>
            <person name="Mkoundinya M."/>
            <person name="Schick M."/>
            <person name="Eisenstein S."/>
            <person name="Neubert P."/>
            <person name="Kstrang K."/>
            <person name="Schatten R."/>
            <person name="Shen B."/>
            <person name="Henze S."/>
            <person name="Mar W."/>
            <person name="Korn B."/>
            <person name="Zuo D."/>
            <person name="Hu Y."/>
            <person name="LaBaer J."/>
        </authorList>
    </citation>
    <scope>NUCLEOTIDE SEQUENCE [LARGE SCALE MRNA]</scope>
</reference>
<reference key="7">
    <citation type="journal article" date="2004" name="Nature">
        <title>The DNA sequence and biology of human chromosome 19.</title>
        <authorList>
            <person name="Grimwood J."/>
            <person name="Gordon L.A."/>
            <person name="Olsen A.S."/>
            <person name="Terry A."/>
            <person name="Schmutz J."/>
            <person name="Lamerdin J.E."/>
            <person name="Hellsten U."/>
            <person name="Goodstein D."/>
            <person name="Couronne O."/>
            <person name="Tran-Gyamfi M."/>
            <person name="Aerts A."/>
            <person name="Altherr M."/>
            <person name="Ashworth L."/>
            <person name="Bajorek E."/>
            <person name="Black S."/>
            <person name="Branscomb E."/>
            <person name="Caenepeel S."/>
            <person name="Carrano A.V."/>
            <person name="Caoile C."/>
            <person name="Chan Y.M."/>
            <person name="Christensen M."/>
            <person name="Cleland C.A."/>
            <person name="Copeland A."/>
            <person name="Dalin E."/>
            <person name="Dehal P."/>
            <person name="Denys M."/>
            <person name="Detter J.C."/>
            <person name="Escobar J."/>
            <person name="Flowers D."/>
            <person name="Fotopulos D."/>
            <person name="Garcia C."/>
            <person name="Georgescu A.M."/>
            <person name="Glavina T."/>
            <person name="Gomez M."/>
            <person name="Gonzales E."/>
            <person name="Groza M."/>
            <person name="Hammon N."/>
            <person name="Hawkins T."/>
            <person name="Haydu L."/>
            <person name="Ho I."/>
            <person name="Huang W."/>
            <person name="Israni S."/>
            <person name="Jett J."/>
            <person name="Kadner K."/>
            <person name="Kimball H."/>
            <person name="Kobayashi A."/>
            <person name="Larionov V."/>
            <person name="Leem S.-H."/>
            <person name="Lopez F."/>
            <person name="Lou Y."/>
            <person name="Lowry S."/>
            <person name="Malfatti S."/>
            <person name="Martinez D."/>
            <person name="McCready P.M."/>
            <person name="Medina C."/>
            <person name="Morgan J."/>
            <person name="Nelson K."/>
            <person name="Nolan M."/>
            <person name="Ovcharenko I."/>
            <person name="Pitluck S."/>
            <person name="Pollard M."/>
            <person name="Popkie A.P."/>
            <person name="Predki P."/>
            <person name="Quan G."/>
            <person name="Ramirez L."/>
            <person name="Rash S."/>
            <person name="Retterer J."/>
            <person name="Rodriguez A."/>
            <person name="Rogers S."/>
            <person name="Salamov A."/>
            <person name="Salazar A."/>
            <person name="She X."/>
            <person name="Smith D."/>
            <person name="Slezak T."/>
            <person name="Solovyev V."/>
            <person name="Thayer N."/>
            <person name="Tice H."/>
            <person name="Tsai M."/>
            <person name="Ustaszewska A."/>
            <person name="Vo N."/>
            <person name="Wagner M."/>
            <person name="Wheeler J."/>
            <person name="Wu K."/>
            <person name="Xie G."/>
            <person name="Yang J."/>
            <person name="Dubchak I."/>
            <person name="Furey T.S."/>
            <person name="DeJong P."/>
            <person name="Dickson M."/>
            <person name="Gordon D."/>
            <person name="Eichler E.E."/>
            <person name="Pennacchio L.A."/>
            <person name="Richardson P."/>
            <person name="Stubbs L."/>
            <person name="Rokhsar D.S."/>
            <person name="Myers R.M."/>
            <person name="Rubin E.M."/>
            <person name="Lucas S.M."/>
        </authorList>
    </citation>
    <scope>NUCLEOTIDE SEQUENCE [LARGE SCALE GENOMIC DNA]</scope>
</reference>
<reference key="8">
    <citation type="submission" date="2005-09" db="EMBL/GenBank/DDBJ databases">
        <authorList>
            <person name="Mural R.J."/>
            <person name="Istrail S."/>
            <person name="Sutton G.G."/>
            <person name="Florea L."/>
            <person name="Halpern A.L."/>
            <person name="Mobarry C.M."/>
            <person name="Lippert R."/>
            <person name="Walenz B."/>
            <person name="Shatkay H."/>
            <person name="Dew I."/>
            <person name="Miller J.R."/>
            <person name="Flanigan M.J."/>
            <person name="Edwards N.J."/>
            <person name="Bolanos R."/>
            <person name="Fasulo D."/>
            <person name="Halldorsson B.V."/>
            <person name="Hannenhalli S."/>
            <person name="Turner R."/>
            <person name="Yooseph S."/>
            <person name="Lu F."/>
            <person name="Nusskern D.R."/>
            <person name="Shue B.C."/>
            <person name="Zheng X.H."/>
            <person name="Zhong F."/>
            <person name="Delcher A.L."/>
            <person name="Huson D.H."/>
            <person name="Kravitz S.A."/>
            <person name="Mouchard L."/>
            <person name="Reinert K."/>
            <person name="Remington K.A."/>
            <person name="Clark A.G."/>
            <person name="Waterman M.S."/>
            <person name="Eichler E.E."/>
            <person name="Adams M.D."/>
            <person name="Hunkapiller M.W."/>
            <person name="Myers E.W."/>
            <person name="Venter J.C."/>
        </authorList>
    </citation>
    <scope>NUCLEOTIDE SEQUENCE [LARGE SCALE GENOMIC DNA]</scope>
</reference>
<reference key="9">
    <citation type="journal article" date="2004" name="Genome Res.">
        <title>The status, quality, and expansion of the NIH full-length cDNA project: the Mammalian Gene Collection (MGC).</title>
        <authorList>
            <consortium name="The MGC Project Team"/>
        </authorList>
    </citation>
    <scope>NUCLEOTIDE SEQUENCE [LARGE SCALE MRNA]</scope>
    <source>
        <tissue>Lung</tissue>
        <tissue>Muscle</tissue>
        <tissue>Uterus</tissue>
    </source>
</reference>
<reference key="10">
    <citation type="submission" date="2008-12" db="UniProtKB">
        <authorList>
            <person name="Lubec G."/>
            <person name="Chen W.-Q."/>
            <person name="Sun Y."/>
        </authorList>
    </citation>
    <scope>PROTEIN SEQUENCE OF 138-160; 165-174 AND 185-196</scope>
    <source>
        <tissue>Fetal brain cortex</tissue>
    </source>
</reference>
<reference key="11">
    <citation type="journal article" date="2005" name="Arch. Biochem. Biophys.">
        <title>Small glutamine-rich tetratricopeptide repeat-containing protein is composed of three structural units with distinct functions.</title>
        <authorList>
            <person name="Liou S.T."/>
            <person name="Wang C."/>
        </authorList>
    </citation>
    <scope>SUBUNIT</scope>
    <scope>INTERACTION WITH HSP90AA1 AND SLC2A1</scope>
</reference>
<reference key="12">
    <citation type="journal article" date="2006" name="Biochem. Biophys. Res. Commun.">
        <title>SGT, a Hsp90beta binding partner, is accumulated in the nucleus during cell apoptosis.</title>
        <authorList>
            <person name="Yin H."/>
            <person name="Wang H."/>
            <person name="Zong H."/>
            <person name="Chen X."/>
            <person name="Wang Y."/>
            <person name="Yun X."/>
            <person name="Wu Y."/>
            <person name="Wang J."/>
            <person name="Gu J."/>
        </authorList>
    </citation>
    <scope>INTERACTION WITH HSP90AB1</scope>
    <scope>SUBCELLULAR LOCATION</scope>
</reference>
<reference key="13">
    <citation type="journal article" date="2006" name="Biochem. Biophys. Res. Commun.">
        <title>Severe acute respiratory syndrome coronavirus protein 7a interacts with hSGT.</title>
        <authorList>
            <person name="Fielding B.C."/>
            <person name="Gunalan V."/>
            <person name="Tan T.H.P."/>
            <person name="Chou C.-F."/>
            <person name="Shen S."/>
            <person name="Khan S."/>
            <person name="Lim S.G."/>
            <person name="Hong W."/>
            <person name="Tan Y.-J."/>
        </authorList>
    </citation>
    <scope>INTERACTION WITH SARS-COV ACCESSORY PROTEIN 7A (MICROBIAL INFECTION)</scope>
</reference>
<reference key="14">
    <citation type="journal article" date="2006" name="Nat. Biotechnol.">
        <title>A probability-based approach for high-throughput protein phosphorylation analysis and site localization.</title>
        <authorList>
            <person name="Beausoleil S.A."/>
            <person name="Villen J."/>
            <person name="Gerber S.A."/>
            <person name="Rush J."/>
            <person name="Gygi S.P."/>
        </authorList>
    </citation>
    <scope>PHOSPHORYLATION [LARGE SCALE ANALYSIS] AT SER-305</scope>
    <scope>IDENTIFICATION BY MASS SPECTROMETRY [LARGE SCALE ANALYSIS]</scope>
    <source>
        <tissue>Cervix carcinoma</tissue>
    </source>
</reference>
<reference key="15">
    <citation type="journal article" date="2007" name="Biochim. Biophys. Acta">
        <title>Cysteine-string protein isoform beta (Cspbeta) is targeted to the trans-Golgi network as a non-palmitoylated CSP in clonal beta-cells.</title>
        <authorList>
            <person name="Boal F."/>
            <person name="Le Pevelen S."/>
            <person name="Cziepluch C."/>
            <person name="Scotti P."/>
            <person name="Lang J."/>
        </authorList>
    </citation>
    <scope>INTERACTION WITH DNAJC5 AND DNAJC5B</scope>
</reference>
<reference key="16">
    <citation type="journal article" date="2008" name="Proc. Natl. Acad. Sci. U.S.A.">
        <title>A quantitative atlas of mitotic phosphorylation.</title>
        <authorList>
            <person name="Dephoure N."/>
            <person name="Zhou C."/>
            <person name="Villen J."/>
            <person name="Beausoleil S.A."/>
            <person name="Bakalarski C.E."/>
            <person name="Elledge S.J."/>
            <person name="Gygi S.P."/>
        </authorList>
    </citation>
    <scope>PHOSPHORYLATION [LARGE SCALE ANALYSIS] AT SER-77; THR-81; SER-301; THR-303 AND SER-305</scope>
    <scope>IDENTIFICATION BY MASS SPECTROMETRY [LARGE SCALE ANALYSIS]</scope>
    <source>
        <tissue>Cervix carcinoma</tissue>
    </source>
</reference>
<reference key="17">
    <citation type="journal article" date="2009" name="Sci. Signal.">
        <title>Quantitative phosphoproteomic analysis of T cell receptor signaling reveals system-wide modulation of protein-protein interactions.</title>
        <authorList>
            <person name="Mayya V."/>
            <person name="Lundgren D.H."/>
            <person name="Hwang S.-I."/>
            <person name="Rezaul K."/>
            <person name="Wu L."/>
            <person name="Eng J.K."/>
            <person name="Rodionov V."/>
            <person name="Han D.K."/>
        </authorList>
    </citation>
    <scope>PHOSPHORYLATION [LARGE SCALE ANALYSIS] AT SER-77; THR-81 AND SER-305</scope>
    <scope>IDENTIFICATION BY MASS SPECTROMETRY [LARGE SCALE ANALYSIS]</scope>
    <source>
        <tissue>Leukemic T-cell</tissue>
    </source>
</reference>
<reference key="18">
    <citation type="journal article" date="2009" name="Science">
        <title>Lysine acetylation targets protein complexes and co-regulates major cellular functions.</title>
        <authorList>
            <person name="Choudhary C."/>
            <person name="Kumar C."/>
            <person name="Gnad F."/>
            <person name="Nielsen M.L."/>
            <person name="Rehman M."/>
            <person name="Walther T.C."/>
            <person name="Olsen J.V."/>
            <person name="Mann M."/>
        </authorList>
    </citation>
    <scope>ACETYLATION [LARGE SCALE ANALYSIS] AT LYS-137</scope>
    <scope>IDENTIFICATION BY MASS SPECTROMETRY [LARGE SCALE ANALYSIS]</scope>
</reference>
<reference key="19">
    <citation type="journal article" date="2010" name="Sci. Signal.">
        <title>Quantitative phosphoproteomics reveals widespread full phosphorylation site occupancy during mitosis.</title>
        <authorList>
            <person name="Olsen J.V."/>
            <person name="Vermeulen M."/>
            <person name="Santamaria A."/>
            <person name="Kumar C."/>
            <person name="Miller M.L."/>
            <person name="Jensen L.J."/>
            <person name="Gnad F."/>
            <person name="Cox J."/>
            <person name="Jensen T.S."/>
            <person name="Nigg E.A."/>
            <person name="Brunak S."/>
            <person name="Mann M."/>
        </authorList>
    </citation>
    <scope>PHOSPHORYLATION [LARGE SCALE ANALYSIS] AT THR-303</scope>
    <scope>IDENTIFICATION BY MASS SPECTROMETRY [LARGE SCALE ANALYSIS]</scope>
    <source>
        <tissue>Cervix carcinoma</tissue>
    </source>
</reference>
<reference key="20">
    <citation type="journal article" date="2011" name="BMC Syst. Biol.">
        <title>Initial characterization of the human central proteome.</title>
        <authorList>
            <person name="Burkard T.R."/>
            <person name="Planyavsky M."/>
            <person name="Kaupe I."/>
            <person name="Breitwieser F.P."/>
            <person name="Buerckstuemmer T."/>
            <person name="Bennett K.L."/>
            <person name="Superti-Furga G."/>
            <person name="Colinge J."/>
        </authorList>
    </citation>
    <scope>IDENTIFICATION BY MASS SPECTROMETRY [LARGE SCALE ANALYSIS]</scope>
</reference>
<reference key="21">
    <citation type="journal article" date="2011" name="Sci. Signal.">
        <title>System-wide temporal characterization of the proteome and phosphoproteome of human embryonic stem cell differentiation.</title>
        <authorList>
            <person name="Rigbolt K.T."/>
            <person name="Prokhorova T.A."/>
            <person name="Akimov V."/>
            <person name="Henningsen J."/>
            <person name="Johansen P.T."/>
            <person name="Kratchmarova I."/>
            <person name="Kassem M."/>
            <person name="Mann M."/>
            <person name="Olsen J.V."/>
            <person name="Blagoev B."/>
        </authorList>
    </citation>
    <scope>PHOSPHORYLATION [LARGE SCALE ANALYSIS] AT SER-301 AND SER-305</scope>
    <scope>IDENTIFICATION BY MASS SPECTROMETRY [LARGE SCALE ANALYSIS]</scope>
</reference>
<reference key="22">
    <citation type="journal article" date="2012" name="Proc. Natl. Acad. Sci. U.S.A.">
        <title>SGTA antagonizes BAG6-mediated protein triage.</title>
        <authorList>
            <person name="Leznicki P."/>
            <person name="High S."/>
        </authorList>
    </citation>
    <scope>FUNCTION</scope>
    <scope>INTERACTION WITH BAG6</scope>
</reference>
<reference key="23">
    <citation type="journal article" date="2013" name="J. Proteome Res.">
        <title>Toward a comprehensive characterization of a human cancer cell phosphoproteome.</title>
        <authorList>
            <person name="Zhou H."/>
            <person name="Di Palma S."/>
            <person name="Preisinger C."/>
            <person name="Peng M."/>
            <person name="Polat A.N."/>
            <person name="Heck A.J."/>
            <person name="Mohammed S."/>
        </authorList>
    </citation>
    <scope>PHOSPHORYLATION [LARGE SCALE ANALYSIS] AT SER-77; THR-81 AND SER-301</scope>
    <scope>IDENTIFICATION BY MASS SPECTROMETRY [LARGE SCALE ANALYSIS]</scope>
    <source>
        <tissue>Cervix carcinoma</tissue>
        <tissue>Erythroleukemia</tissue>
    </source>
</reference>
<reference key="24">
    <citation type="journal article" date="2014" name="J. Cell Sci.">
        <title>SGTA regulates the cytosolic quality control of hydrophobic substrates.</title>
        <authorList>
            <person name="Wunderley L."/>
            <person name="Leznicki P."/>
            <person name="Payapilly A."/>
            <person name="High S."/>
        </authorList>
    </citation>
    <scope>FUNCTION</scope>
    <scope>INTERACTION WITH BAG6</scope>
</reference>
<reference key="25">
    <citation type="journal article" date="2014" name="J. Proteomics">
        <title>An enzyme assisted RP-RPLC approach for in-depth analysis of human liver phosphoproteome.</title>
        <authorList>
            <person name="Bian Y."/>
            <person name="Song C."/>
            <person name="Cheng K."/>
            <person name="Dong M."/>
            <person name="Wang F."/>
            <person name="Huang J."/>
            <person name="Sun D."/>
            <person name="Wang L."/>
            <person name="Ye M."/>
            <person name="Zou H."/>
        </authorList>
    </citation>
    <scope>PHOSPHORYLATION [LARGE SCALE ANALYSIS] AT THR-81; THR-303 AND SER-305</scope>
    <scope>IDENTIFICATION BY MASS SPECTROMETRY [LARGE SCALE ANALYSIS]</scope>
    <source>
        <tissue>Liver</tissue>
    </source>
</reference>
<reference key="26">
    <citation type="journal article" date="2014" name="PLoS Pathog.">
        <title>A cytosolic chaperone complexes with dynamic membrane J-proteins and mobilizes a nonenveloped virus out of the endoplasmic reticulum.</title>
        <authorList>
            <person name="Walczak C.P."/>
            <person name="Ravindran M.S."/>
            <person name="Inoue T."/>
            <person name="Tsai B."/>
        </authorList>
    </citation>
    <scope>FUNCTION (MICROBIAL INFECTION)</scope>
    <scope>IDENTIFICATION IN A COMPLEX WITH DNAJB12 AND DNAJB14</scope>
    <scope>INTERACTION WITH HSPA8</scope>
</reference>
<reference key="27">
    <citation type="journal article" date="2015" name="Proc. Natl. Acad. Sci. U.S.A.">
        <title>Bag6 complex contains a minimal tail-anchor-targeting module and a mock BAG domain.</title>
        <authorList>
            <person name="Mock J.Y."/>
            <person name="Chartron J.W."/>
            <person name="Zaslaver M."/>
            <person name="Xu Y."/>
            <person name="Ye Y."/>
            <person name="Clemons W.M. Jr."/>
        </authorList>
    </citation>
    <scope>FUNCTION</scope>
    <scope>MUTAGENESIS OF CYS-38</scope>
</reference>
<reference key="28">
    <citation type="journal article" date="2016" name="Sci. Rep.">
        <title>Structural and functional insights into the E3 ligase, RNF126.</title>
        <authorList>
            <person name="Krysztofinska E.M."/>
            <person name="Martinez-Lumbreras S."/>
            <person name="Thapaliya A."/>
            <person name="Evans N.J."/>
            <person name="High S."/>
            <person name="Isaacson R.L."/>
        </authorList>
    </citation>
    <scope>FUNCTION</scope>
    <scope>INTERACTION WITH BAG6</scope>
</reference>
<reference key="29">
    <citation type="journal article" date="2017" name="Science">
        <title>Mechanistic basis for a molecular triage reaction.</title>
        <authorList>
            <person name="Shao S."/>
            <person name="Rodrigo-Brenni M.C."/>
            <person name="Kivlen M.H."/>
            <person name="Hegde R.S."/>
        </authorList>
    </citation>
    <scope>FUNCTION</scope>
</reference>
<reference key="30">
    <citation type="journal article" date="2008" name="Biochemistry">
        <title>Structural and functional characterization of human SGT and its interaction with Vpu of the human immunodeficiency virus type 1.</title>
        <authorList>
            <person name="Dutta S."/>
            <person name="Tan Y.J."/>
        </authorList>
    </citation>
    <scope>X-RAY CRYSTALLOGRAPHY (2.4 ANGSTROMS) OF 84-210</scope>
    <scope>SUBUNIT (MICROBIAL INFECTION)</scope>
    <scope>FUNCTION</scope>
</reference>
<keyword id="KW-0002">3D-structure</keyword>
<keyword id="KW-0007">Acetylation</keyword>
<keyword id="KW-0143">Chaperone</keyword>
<keyword id="KW-0963">Cytoplasm</keyword>
<keyword id="KW-0903">Direct protein sequencing</keyword>
<keyword id="KW-0945">Host-virus interaction</keyword>
<keyword id="KW-0539">Nucleus</keyword>
<keyword id="KW-0597">Phosphoprotein</keyword>
<keyword id="KW-1267">Proteomics identification</keyword>
<keyword id="KW-1185">Reference proteome</keyword>
<keyword id="KW-0677">Repeat</keyword>
<keyword id="KW-0802">TPR repeat</keyword>
<sequence>MDNKKRLAYAIIQFLHDQLRHGGLSSDAQESLEVAIQCLETAFGVTVEDSDLALPQTLPEIFEAAATGKEMPQDLRSPARTPPSEEDSAEAERLKTEGNEQMKVENFEAAVHFYGKAIELNPANAVYFCNRAAAYSKLGNYAGAVQDCERAICIDPAYSKAYGRMGLALSSLNKHVEAVAYYKKALELDPDNETYKSNLKIAELKLREAPSPTGGVGSFDIAGLLNNPGFMSMASNLMNNPQIQQLMSGMISGGNNPLGTPGTSPSQNDLASLIQAGQQFAQQMQQQNPELIEQLRSQIRSRTPSASNDDQQE</sequence>
<gene>
    <name type="primary">SGTA</name>
    <name type="synonym">SGT</name>
    <name type="synonym">SGT1</name>
</gene>